<comment type="function">
    <text evidence="2 5 9 10 11 12 15 16 19 22 23 29 31 33 37 40 43 52 53 54 56 60 61 65">Pattern recognition receptor (PRR) that detects bacterial peptidoglycan fragments and other danger signals and plays an important role in gastrointestinal immunity (PubMed:12514169, PubMed:12527755, PubMed:12626759, PubMed:15044951, PubMed:15998797, PubMed:27283905, PubMed:27748583, PubMed:31649195). Specifically activated by muramyl dipeptide (MDP), a fragment of bacterial peptidoglycan found in every bacterial peptidoglycan type (PubMed:12514169, PubMed:12527755, PubMed:12626759, PubMed:12871942, PubMed:15044951, PubMed:15198989, PubMed:15998797, PubMed:22857257, PubMed:23322906, PubMed:27748583, PubMed:36002575). NOD2 specifically recognizes and binds 6-O-phospho-MDP, the phosphorylated form of MDP, which is generated by NAGK (PubMed:36002575). 6-O-phospho-MDP-binding triggers oligomerization that facilitates the binding and subsequent activation of the proximal adapter receptor-interacting RIPK2 (PubMed:11087742, PubMed:17355968, PubMed:21887730, PubMed:23806334, PubMed:28436939). Following recruitment, RIPK2 undergoes 'Met-1'- (linear) and 'Lys-63'-linked polyubiquitination by E3 ubiquitin-protein ligases XIAP, BIRC2, BIRC3 and the LUBAC complex, becoming a scaffolding protein for downstream effectors, triggering activation of the NF-kappa-B and MAP kinases signaling (PubMed:11087742, PubMed:12514169, PubMed:12626759, PubMed:15198989, PubMed:21887730, PubMed:23322906, PubMed:23806334, PubMed:28436939). This in turn leads to the transcriptional activation of hundreds of genes involved in immune response (PubMed:15198989). Its ability to detect bacterial MDP plays a central role in maintaining the equilibrium between intestinal microbiota and host immune responses to control inflammation (By similarity). An imbalance in this relationship results in dysbiosis, whereby pathogenic bacteria prevail on commensals, causing damage in the intestinal epithelial barrier as well as allowing bacterial invasion and inflammation (By similarity). Acts as a regulator of appetite by sensing MDP in a subset of brain neurons: microbiota-derived MDP reach the brain, where they bind and activate NOD2 in inhibitory hypothalamic neurons, decreasing neuronal activity, thereby regulating satiety and body temperature (By similarity). NOD2-dependent MDP-sensing of bacterial cell walls in the intestinal epithelial compartment contributes to sustained postnatal growth upon undernutrition (By similarity). Also plays a role in antiviral response by acting as a sensor of single-stranded RNA (ssRNA) from viruses: upon ssRNA-binding, interacts with MAVS, leading to activation of interferon regulatory factor-3/IRF3 and expression of type I interferon (PubMed:19701189). Also acts as a regulator of autophagy in dendritic cells via its interaction with ATG16L1, possibly by recruiting ATG16L1 at the site of bacterial entry (PubMed:20637199). NOD2 activation in the small intestine crypt also contributes to intestinal stem cells survival and function: acts by promoting mitophagy via its association with ATG16L1 (By similarity). In addition to its main role in innate immunity, also regulates the adaptive immune system by acting as regulator of helper T-cell and regulatory T-cells (Tregs) (By similarity). Besides recognizing pathogens, also involved in the endoplasmic reticulum stress response: acts by sensing and binding to the cytosolic metabolite sphingosine-1-phosphate generated in response to endoplasmic reticulum stress, initiating an inflammation process that leads to activation of the NF-kappa-B and MAP kinases signaling (PubMed:27007849, PubMed:33942347). May also be involved in NLRP1 activation following activation by MDP, leading to CASP1 activation and IL1B release in macrophages (PubMed:18511561).</text>
</comment>
<comment type="function">
    <molecule>Isoform 2</molecule>
    <text evidence="5">Acts as a pattern recognition receptor (PRR); able to activate NF-kappa-B.</text>
</comment>
<comment type="function">
    <molecule>Isoform 3</molecule>
    <text evidence="32">Can activate NF-kappa-B in a muramyl dipeptide (MDP)-independent manner.</text>
</comment>
<comment type="activity regulation">
    <text evidence="1">ADP-binding promotes an inactive closed conformation.</text>
</comment>
<comment type="subunit">
    <text evidence="5 15 20 22 23 28 29 31 33 35 38 39 41 42 44 45 49 55 56 57 58 59 66">Homooligomer: homooligomerizes following muramyl dipeptide (MDP)-binding, promoting RIPK2 recruitment (PubMed:11087742, PubMed:22700971). Interacts (via CARD domain) with RIPK2 (via CARD domain) (PubMed:11087742, PubMed:15044951, PubMed:17355968, PubMed:19592251, PubMed:27812135, PubMed:30279485, PubMed:30478312). Following RIPK2 recruitment, RIPK2 homooligomerizes via its CARD domain and forms long filaments named RIPosomes (PubMed:30279485, PubMed:30478312). Interacts (via CARD domain) with ubiquitin; inhibiting interaction with RIPK2 (PubMed:23300079). Component of a signaling complex consisting of ARHGEF2, NOD2 and RIPK2 (PubMed:21887730). Interacts with ANKRD17 (via N-terminus) (PubMed:23711367). Interacts with HSPA1A; the interaction enhances NOD2 stability (PubMed:24790089). Interacts (via both CARD domains) with HSP90; the interaction enhances NOD2 stability (PubMed:23019338). Interacts (via CARD domain) with SOCS3; the interaction promotes NOD2 degradation (PubMed:23019338). Interacts (via CARD domain) with ERBIN; the interaction inhibits activation of NOD2 (PubMed:16203728). Interacts with MAPKBP1; the interaction is enhanced in the presence of muramyl dipeptide (MDP) and inhibits NOD2 homooligomerization and activation (PubMed:22700971). Interacts with INAVA; the interaction takes place upon Pattern recognition receptor (PRR) stimulation (PubMed:28436939). Interacts (via NACHT domain) with CARD9 (PubMed:24960071). Interacts (via CARD domain) with CASP1; this interaction leads to IL1B processing (PubMed:18511561). Also interacts with CASP4 (PubMed:18511561). Interacts with NLRP1; this interaction is enhanced in the presence of muramyl dipeptide (MDP) and leads to increased IL1B release (PubMed:18511561). Interacts with NLRP12; this interaction promotes degradation of NOD2 through the ubiquitin-proteasome pathway (PubMed:30559449). Interacts with ANKHD1, C10orf67, CHMP5, DOCK7, ENTR1, KRT15, LDOC1, PPP1R12C, PPP2R3B, TRIM41 and VIM (PubMed:27812135). Interacts with MAVS; interaction takes place following single-stranded RNA (ssRNA)-binding (PubMed:19701189). Interacts with ATG16L1 (PubMed:20637199, PubMed:23376921). Interacts with IRGM; promoting IRGM 'Lys-63'-linked polyubiquitination, which is required for interactions with the core autophagy factors (PubMed:25891078, PubMed:36221902).</text>
</comment>
<comment type="interaction">
    <interactant intactId="EBI-7445625">
        <id>Q9HC29</id>
    </interactant>
    <interactant intactId="EBI-359558">
        <id>Q8IWZ3</id>
        <label>ANKHD1</label>
    </interactant>
    <organismsDiffer>false</organismsDiffer>
    <experiments>5</experiments>
</comment>
<comment type="interaction">
    <interactant intactId="EBI-7445625">
        <id>Q9HC29</id>
    </interactant>
    <interactant intactId="EBI-2836278">
        <id>Q8IYJ2</id>
        <label>C10orf67</label>
    </interactant>
    <organismsDiffer>false</organismsDiffer>
    <experiments>5</experiments>
</comment>
<comment type="interaction">
    <interactant intactId="EBI-7445625">
        <id>Q9HC29</id>
    </interactant>
    <interactant intactId="EBI-516667">
        <id>P29466</id>
        <label>CASP1</label>
    </interactant>
    <organismsDiffer>false</organismsDiffer>
    <experiments>4</experiments>
</comment>
<comment type="interaction">
    <interactant intactId="EBI-7445625">
        <id>Q9HC29</id>
    </interactant>
    <interactant intactId="EBI-751303">
        <id>Q9NZZ3</id>
        <label>CHMP5</label>
    </interactant>
    <organismsDiffer>false</organismsDiffer>
    <experiments>5</experiments>
</comment>
<comment type="interaction">
    <interactant intactId="EBI-7445625">
        <id>Q9HC29</id>
    </interactant>
    <interactant intactId="EBI-2433703">
        <id>Q96N67</id>
        <label>DOCK7</label>
    </interactant>
    <organismsDiffer>false</organismsDiffer>
    <experiments>5</experiments>
</comment>
<comment type="interaction">
    <interactant intactId="EBI-7445625">
        <id>Q9HC29</id>
    </interactant>
    <interactant intactId="EBI-717093">
        <id>Q96C92</id>
        <label>ENTR1</label>
    </interactant>
    <organismsDiffer>false</organismsDiffer>
    <experiments>5</experiments>
</comment>
<comment type="interaction">
    <interactant intactId="EBI-7445625">
        <id>Q9HC29</id>
    </interactant>
    <interactant intactId="EBI-993903">
        <id>Q96RT1</id>
        <label>ERBIN</label>
    </interactant>
    <organismsDiffer>false</organismsDiffer>
    <experiments>5</experiments>
</comment>
<comment type="interaction">
    <interactant intactId="EBI-7445625">
        <id>Q9HC29</id>
    </interactant>
    <interactant intactId="EBI-8449250">
        <id>Q96RT1-2</id>
        <label>ERBIN</label>
    </interactant>
    <organismsDiffer>false</organismsDiffer>
    <experiments>5</experiments>
</comment>
<comment type="interaction">
    <interactant intactId="EBI-7445625">
        <id>Q9HC29</id>
    </interactant>
    <interactant intactId="EBI-3385283">
        <id>Q9Y3D6</id>
        <label>FIS1</label>
    </interactant>
    <organismsDiffer>false</organismsDiffer>
    <experiments>2</experiments>
</comment>
<comment type="interaction">
    <interactant intactId="EBI-7445625">
        <id>Q9HC29</id>
    </interactant>
    <interactant intactId="EBI-10226985">
        <id>Q10471</id>
        <label>GALNT2</label>
    </interactant>
    <organismsDiffer>false</organismsDiffer>
    <experiments>2</experiments>
</comment>
<comment type="interaction">
    <interactant intactId="EBI-7445625">
        <id>Q9HC29</id>
    </interactant>
    <interactant intactId="EBI-2557212">
        <id>Q70UQ0</id>
        <label>IKBIP</label>
    </interactant>
    <organismsDiffer>false</organismsDiffer>
    <experiments>4</experiments>
</comment>
<comment type="interaction">
    <interactant intactId="EBI-7445625">
        <id>Q9HC29</id>
    </interactant>
    <interactant intactId="EBI-399080">
        <id>Q92993</id>
        <label>KAT5</label>
    </interactant>
    <organismsDiffer>false</organismsDiffer>
    <experiments>2</experiments>
</comment>
<comment type="interaction">
    <interactant intactId="EBI-7445625">
        <id>Q9HC29</id>
    </interactant>
    <interactant intactId="EBI-739566">
        <id>P19012</id>
        <label>KRT15</label>
    </interactant>
    <organismsDiffer>false</organismsDiffer>
    <experiments>4</experiments>
</comment>
<comment type="interaction">
    <interactant intactId="EBI-7445625">
        <id>Q9HC29</id>
    </interactant>
    <interactant intactId="EBI-740738">
        <id>O95751</id>
        <label>LDOC1</label>
    </interactant>
    <organismsDiffer>false</organismsDiffer>
    <experiments>5</experiments>
</comment>
<comment type="interaction">
    <interactant intactId="EBI-7445625">
        <id>Q9HC29</id>
    </interactant>
    <interactant intactId="EBI-372742">
        <id>Q9P0J0</id>
        <label>NDUFA13</label>
    </interactant>
    <organismsDiffer>false</organismsDiffer>
    <experiments>6</experiments>
</comment>
<comment type="interaction">
    <interactant intactId="EBI-7445625">
        <id>Q9HC29</id>
    </interactant>
    <interactant intactId="EBI-2804156">
        <id>Q6UX06</id>
        <label>OLFM4</label>
    </interactant>
    <organismsDiffer>false</organismsDiffer>
    <experiments>2</experiments>
</comment>
<comment type="interaction">
    <interactant intactId="EBI-7445625">
        <id>Q9HC29</id>
    </interactant>
    <interactant intactId="EBI-721802">
        <id>Q9BZL4</id>
        <label>PPP1R12C</label>
    </interactant>
    <organismsDiffer>false</organismsDiffer>
    <experiments>5</experiments>
</comment>
<comment type="interaction">
    <interactant intactId="EBI-7445625">
        <id>Q9HC29</id>
    </interactant>
    <interactant intactId="EBI-2479826">
        <id>Q9Y5P8</id>
        <label>PPP2R3B</label>
    </interactant>
    <organismsDiffer>false</organismsDiffer>
    <experiments>5</experiments>
</comment>
<comment type="interaction">
    <interactant intactId="EBI-7445625">
        <id>Q9HC29</id>
    </interactant>
    <interactant intactId="EBI-968374">
        <id>Q16537</id>
        <label>PPP2R5E</label>
    </interactant>
    <organismsDiffer>false</organismsDiffer>
    <experiments>2</experiments>
</comment>
<comment type="interaction">
    <interactant intactId="EBI-7445625">
        <id>Q9HC29</id>
    </interactant>
    <interactant intactId="EBI-5564642">
        <id>Q569H4</id>
        <label>PRR16</label>
    </interactant>
    <organismsDiffer>false</organismsDiffer>
    <experiments>4</experiments>
</comment>
<comment type="interaction">
    <interactant intactId="EBI-7445625">
        <id>Q9HC29</id>
    </interactant>
    <interactant intactId="EBI-358522">
        <id>O43353</id>
        <label>RIPK2</label>
    </interactant>
    <organismsDiffer>false</organismsDiffer>
    <experiments>10</experiments>
</comment>
<comment type="interaction">
    <interactant intactId="EBI-7445625">
        <id>Q9HC29</id>
    </interactant>
    <interactant intactId="EBI-12179023">
        <id>Q8IY34</id>
        <label>SLC15A3</label>
    </interactant>
    <organismsDiffer>false</organismsDiffer>
    <experiments>2</experiments>
</comment>
<comment type="interaction">
    <interactant intactId="EBI-7445625">
        <id>Q9HC29</id>
    </interactant>
    <interactant intactId="EBI-4319594">
        <id>Q8N697</id>
        <label>SLC15A4</label>
    </interactant>
    <organismsDiffer>false</organismsDiffer>
    <experiments>2</experiments>
</comment>
<comment type="interaction">
    <interactant intactId="EBI-7445625">
        <id>Q9HC29</id>
    </interactant>
    <interactant intactId="EBI-711424">
        <id>Q04724</id>
        <label>TLE1</label>
    </interactant>
    <organismsDiffer>false</organismsDiffer>
    <experiments>2</experiments>
</comment>
<comment type="interaction">
    <interactant intactId="EBI-7445625">
        <id>Q9HC29</id>
    </interactant>
    <interactant intactId="EBI-954123">
        <id>Q8IYM9</id>
        <label>TRIM22</label>
    </interactant>
    <organismsDiffer>false</organismsDiffer>
    <experiments>5</experiments>
</comment>
<comment type="interaction">
    <interactant intactId="EBI-7445625">
        <id>Q9HC29</id>
    </interactant>
    <interactant intactId="EBI-719493">
        <id>P14373</id>
        <label>TRIM27</label>
    </interactant>
    <organismsDiffer>false</organismsDiffer>
    <experiments>10</experiments>
</comment>
<comment type="interaction">
    <interactant intactId="EBI-7445625">
        <id>Q9HC29</id>
    </interactant>
    <interactant intactId="EBI-725997">
        <id>Q8WV44</id>
        <label>TRIM41</label>
    </interactant>
    <organismsDiffer>false</organismsDiffer>
    <experiments>5</experiments>
</comment>
<comment type="interaction">
    <interactant intactId="EBI-7445625">
        <id>Q9HC29</id>
    </interactant>
    <interactant intactId="EBI-355164">
        <id>P55072</id>
        <label>VCP</label>
    </interactant>
    <organismsDiffer>false</organismsDiffer>
    <experiments>5</experiments>
</comment>
<comment type="interaction">
    <interactant intactId="EBI-7445625">
        <id>Q9HC29</id>
    </interactant>
    <interactant intactId="EBI-353844">
        <id>P08670</id>
        <label>VIM</label>
    </interactant>
    <organismsDiffer>false</organismsDiffer>
    <experiments>12</experiments>
</comment>
<comment type="interaction">
    <interactant intactId="EBI-21496213">
        <id>Q9HC29-1</id>
    </interactant>
    <interactant intactId="EBI-739074">
        <id>Q9UJY1</id>
        <label>HSPB8</label>
    </interactant>
    <organismsDiffer>false</organismsDiffer>
    <experiments>2</experiments>
</comment>
<comment type="subcellular location">
    <subcellularLocation>
        <location evidence="19 46 60 63">Cell membrane</location>
        <topology evidence="60 63">Lipid-anchor</topology>
    </subcellularLocation>
    <subcellularLocation>
        <location evidence="20 22">Basolateral cell membrane</location>
    </subcellularLocation>
    <subcellularLocation>
        <location evidence="13 19 29 44 46">Cytoplasm</location>
    </subcellularLocation>
    <subcellularLocation>
        <location evidence="29">Mitochondrion</location>
    </subcellularLocation>
    <text evidence="63">Palmitoylation promotes localization to the cell membrane, where it detects bacterial invasion at the point of entry.</text>
</comment>
<comment type="subcellular location">
    <molecule>Isoform 3</molecule>
    <subcellularLocation>
        <location evidence="32">Cytoplasm</location>
    </subcellularLocation>
</comment>
<comment type="alternative products">
    <event type="alternative initiation"/>
    <isoform>
        <id>Q9HC29-1</id>
        <name>1</name>
        <name evidence="67">Nod2</name>
        <name evidence="70">NOD2L</name>
        <sequence type="displayed"/>
    </isoform>
    <isoform>
        <id>Q9HC29-2</id>
        <name>2</name>
        <name evidence="67">Nod2b</name>
        <name evidence="70">NOD2S</name>
        <sequence type="described" ref="VSP_018689"/>
    </isoform>
    <isoform>
        <id>Q9HC29-3</id>
        <name>3</name>
        <name evidence="69">NOD2-C2</name>
        <sequence type="described" ref="VSP_018689 VSP_046567 VSP_046568"/>
    </isoform>
</comment>
<comment type="tissue specificity">
    <text evidence="5 13 35">Expressed in monocytes, macrophages, dendritic cells, hepatocytes, preadipocytes, epithelial cells of oral cavity, lung and intestine, with higher expression in ileal Paneth cells and in intestinal stem cells.</text>
</comment>
<comment type="tissue specificity">
    <molecule>Isoform 3</molecule>
    <text evidence="32">Expressed at higher level in leukocytes.</text>
</comment>
<comment type="induction">
    <text evidence="55">Up-regulated by muramyl-dipeptide and lipopolysaccharide.</text>
</comment>
<comment type="domain">
    <text evidence="41">The ATG16L1-binding motif mediates interaction with ATG16L1.</text>
</comment>
<comment type="domain">
    <text evidence="23">Intramolecular interactions between the N-terminal moiety and the leucine-rich repeats (LRR) may be important for autoinhibition in the absence of activating signal.</text>
</comment>
<comment type="domain">
    <text evidence="54">The LRR repeats recognize and bind muramyl dipeptide (MDP).</text>
</comment>
<comment type="domain">
    <text evidence="61">The NACHT domain recognizes and binds sphingosine-1-phosphate in response to endoplasmic reticulum stress.</text>
</comment>
<comment type="PTM">
    <text evidence="60 63 64">Palmitoylated by ZDHHC5; palmitoylation is required for proper recruitment to the bacterial entry site and hence for proper signaling upon cognate peptidoglycan detection (PubMed:31649195, PubMed:34293401, PubMed:35066577). Palmitoylation promotes localization to the cell membrane (PubMed:34293401). Palmitoylation protects from SQSTM1/p62-dependent autophagic degradation (PubMed:35066577).</text>
</comment>
<comment type="PTM">
    <text evidence="36 38">Polyubiquitinated by TRIM27, leading to proteasome-mediated degradation (PubMed:22829933). Polyubiquitinated and degraded following muramyl dipeptide (MDP) stimulation, conferring MDP tolerance and preventing septic shock (PubMed:23019338).</text>
</comment>
<comment type="PTM">
    <text evidence="64 66">Degraded via selective autophagy following interaction with IRGM (PubMed:35066577, PubMed:36221902). IRGM promotes NOD2-RIPK2 RIPosome recruitment to autophagosome membranes, promoting their SQSTM1/p62-dependent autophagic degradation (PubMed:36221902).</text>
</comment>
<comment type="PTM">
    <text evidence="51">O-glycosylated by OGT, O-GlcNAcylation increases protein stability.</text>
</comment>
<comment type="disease" evidence="8 11 17 18 24 25 26 27 30 45 46 47 48 55 62">
    <disease id="DI-01286">
        <name>Blau syndrome</name>
        <acronym>BLAUS</acronym>
        <description>An autosomal dominant inflammatory disorder characterized by the formation of immune granulomas invading the skin, joints and eye. Other organs may be involved. Clinical manifestations are variable and include early-onset granulomatous arthritis, uveitis and skin rash. Blindness, joint destruction and visceral involvement have been reported in severe cases.</description>
        <dbReference type="MIM" id="186580"/>
    </disease>
    <text>The disease is caused by variants affecting the gene represented in this entry.</text>
</comment>
<comment type="disease" evidence="6 7 9 11 14 15 16 19 21 44 45 55">
    <disease id="DI-01452">
        <name>Inflammatory bowel disease 1</name>
        <acronym>IBD1</acronym>
        <description>A chronic, relapsing inflammation of the gastrointestinal tract with a complex etiology. It is subdivided into Crohn disease and ulcerative colitis phenotypes. Crohn disease may affect any part of the gastrointestinal tract from the mouth to the anus, but most frequently it involves the terminal ileum and colon. Bowel inflammation is transmural and discontinuous; it may contain granulomas or be associated with intestinal or perianal fistulas. In contrast, in ulcerative colitis, the inflammation is continuous and limited to rectal and colonic mucosal layers; fistulas and granulomas are not observed. Both diseases include extraintestinal inflammation of the skin, eyes, or joints.</description>
        <dbReference type="MIM" id="266600"/>
    </disease>
    <text>Disease susceptibility is associated with variants affecting the gene represented in this entry.</text>
</comment>
<comment type="disease" evidence="34 50">
    <disease id="DI-04941">
        <name>Yao syndrome</name>
        <acronym>YAOS</acronym>
        <description>An autoinflammatory disease characterized by periodic fever, dermatitis, polyarthritis, leg swelling, and gastrointestinal and sicca-like symptoms. YAOS is a complex disease with multifactorial inheritance.</description>
        <dbReference type="MIM" id="617321"/>
    </disease>
    <text>Disease susceptibility is associated with variants affecting the gene represented in this entry.</text>
</comment>
<comment type="miscellaneous">
    <molecule>Isoform 1</molecule>
    <text evidence="5">Most abundant isoform.</text>
</comment>
<comment type="similarity">
    <text evidence="71">Belongs to the NOD1-NOD2 family.</text>
</comment>
<comment type="online information" name="INFEVERS">
    <link uri="https://infevers.umai-montpellier.fr/web/search.php?n=6"/>
    <text>Repertory of FMF and hereditary autoinflammatory disorders mutations</text>
</comment>
<gene>
    <name evidence="67 72" type="primary">NOD2</name>
    <name evidence="68" type="synonym">CARD15</name>
</gene>
<feature type="chain" id="PRO_0000004418" description="Nucleotide-binding oligomerization domain-containing protein 2">
    <location>
        <begin position="1"/>
        <end position="1040"/>
    </location>
</feature>
<feature type="domain" description="CARD 1" evidence="3">
    <location>
        <begin position="26"/>
        <end position="122"/>
    </location>
</feature>
<feature type="domain" description="CARD 2" evidence="3">
    <location>
        <begin position="126"/>
        <end position="218"/>
    </location>
</feature>
<feature type="domain" description="NACHT" evidence="4">
    <location>
        <begin position="293"/>
        <end position="618"/>
    </location>
</feature>
<feature type="repeat" description="LRR 1">
    <location>
        <begin position="791"/>
        <end position="812"/>
    </location>
</feature>
<feature type="repeat" description="LRR 2">
    <location>
        <begin position="816"/>
        <end position="839"/>
    </location>
</feature>
<feature type="repeat" description="LRR 3">
    <location>
        <begin position="844"/>
        <end position="865"/>
    </location>
</feature>
<feature type="repeat" description="LRR 4">
    <location>
        <begin position="872"/>
        <end position="884"/>
    </location>
</feature>
<feature type="repeat" description="LRR 5">
    <location>
        <begin position="900"/>
        <end position="920"/>
    </location>
</feature>
<feature type="repeat" description="LRR 6">
    <location>
        <begin position="928"/>
        <end position="949"/>
    </location>
</feature>
<feature type="repeat" description="LRR 7">
    <location>
        <begin position="956"/>
        <end position="976"/>
    </location>
</feature>
<feature type="repeat" description="LRR 8">
    <location>
        <begin position="984"/>
        <end position="1005"/>
    </location>
</feature>
<feature type="repeat" description="LRR 9">
    <location>
        <begin position="1012"/>
        <end position="1032"/>
    </location>
</feature>
<feature type="region of interest" description="Required for CARD9 binding" evidence="45">
    <location>
        <begin position="241"/>
        <end position="274"/>
    </location>
</feature>
<feature type="short sequence motif" description="ATG16L1-binding motif" evidence="41">
    <location>
        <begin position="63"/>
        <end position="77"/>
    </location>
</feature>
<feature type="binding site" evidence="1">
    <location>
        <position position="239"/>
    </location>
    <ligand>
        <name>ADP</name>
        <dbReference type="ChEBI" id="CHEBI:456216"/>
    </ligand>
</feature>
<feature type="binding site" evidence="1">
    <location>
        <position position="252"/>
    </location>
    <ligand>
        <name>ADP</name>
        <dbReference type="ChEBI" id="CHEBI:456216"/>
    </ligand>
</feature>
<feature type="binding site" evidence="1">
    <location>
        <position position="253"/>
    </location>
    <ligand>
        <name>ADP</name>
        <dbReference type="ChEBI" id="CHEBI:456216"/>
    </ligand>
</feature>
<feature type="binding site" evidence="4">
    <location>
        <begin position="299"/>
        <end position="306"/>
    </location>
    <ligand>
        <name>ATP</name>
        <dbReference type="ChEBI" id="CHEBI:30616"/>
    </ligand>
</feature>
<feature type="binding site" evidence="1">
    <location>
        <position position="302"/>
    </location>
    <ligand>
        <name>ADP</name>
        <dbReference type="ChEBI" id="CHEBI:456216"/>
    </ligand>
</feature>
<feature type="binding site" evidence="1">
    <location>
        <position position="303"/>
    </location>
    <ligand>
        <name>ADP</name>
        <dbReference type="ChEBI" id="CHEBI:456216"/>
    </ligand>
</feature>
<feature type="binding site" evidence="1">
    <location>
        <position position="304"/>
    </location>
    <ligand>
        <name>ADP</name>
        <dbReference type="ChEBI" id="CHEBI:456216"/>
    </ligand>
</feature>
<feature type="binding site" evidence="1">
    <location>
        <position position="305"/>
    </location>
    <ligand>
        <name>ADP</name>
        <dbReference type="ChEBI" id="CHEBI:456216"/>
    </ligand>
</feature>
<feature type="binding site" evidence="1">
    <location>
        <position position="306"/>
    </location>
    <ligand>
        <name>ADP</name>
        <dbReference type="ChEBI" id="CHEBI:456216"/>
    </ligand>
</feature>
<feature type="binding site" evidence="1">
    <location>
        <position position="307"/>
    </location>
    <ligand>
        <name>ADP</name>
        <dbReference type="ChEBI" id="CHEBI:456216"/>
    </ligand>
</feature>
<feature type="binding site" evidence="1">
    <location>
        <position position="603"/>
    </location>
    <ligand>
        <name>ADP</name>
        <dbReference type="ChEBI" id="CHEBI:456216"/>
    </ligand>
</feature>
<feature type="lipid moiety-binding region" description="S-palmitoyl cysteine" evidence="60 63 64">
    <location>
        <position position="395"/>
    </location>
</feature>
<feature type="lipid moiety-binding region" description="S-palmitoyl cysteine" evidence="60 63 64">
    <location>
        <position position="1033"/>
    </location>
</feature>
<feature type="splice variant" id="VSP_018689" description="In isoform 2 and isoform 3." evidence="67 69">
    <location>
        <begin position="1"/>
        <end position="27"/>
    </location>
</feature>
<feature type="splice variant" id="VSP_046567" description="In isoform 3." evidence="69">
    <original>AATCKKYMA</original>
    <variation>DERTEAQKG</variation>
    <location>
        <begin position="216"/>
        <end position="224"/>
    </location>
</feature>
<feature type="splice variant" id="VSP_046568" description="In isoform 3." evidence="69">
    <location>
        <begin position="225"/>
        <end position="1040"/>
    </location>
</feature>
<feature type="sequence variant" id="VAR_036871" description="In dbSNP:rs34936594.">
    <original>L</original>
    <variation>V</variation>
    <location>
        <position position="81"/>
    </location>
</feature>
<feature type="sequence variant" id="VAR_073228" description="In IBD1; uncertain significance; dbSNP:rs104895468." evidence="14">
    <original>D</original>
    <variation>N</variation>
    <location>
        <position position="113"/>
    </location>
</feature>
<feature type="sequence variant" id="VAR_012665" description="In IBD1; uncertain significance; dbSNP:rs34684955." evidence="6">
    <original>A</original>
    <variation>T</variation>
    <location>
        <position position="140"/>
    </location>
</feature>
<feature type="sequence variant" id="VAR_012666" description="In IBD1; uncertain significance; dbSNP:rs104895420." evidence="6">
    <original>W</original>
    <variation>R</variation>
    <location>
        <position position="157"/>
    </location>
</feature>
<feature type="sequence variant" id="VAR_012667" description="In dbSNP:rs61755182." evidence="6">
    <original>T</original>
    <variation>M</variation>
    <location>
        <position position="189"/>
    </location>
</feature>
<feature type="sequence variant" id="VAR_012668" description="In IBD1; uncertain significance; dbSNP:rs104895422." evidence="6">
    <original>R</original>
    <variation>C</variation>
    <location>
        <position position="235"/>
    </location>
</feature>
<feature type="sequence variant" id="VAR_012669" description="In IBD1; uncertain significance; no disruption of NOD2-CARD9 interaction; dbSNP:rs104895423." evidence="6 45">
    <original>L</original>
    <variation>R</variation>
    <location>
        <position position="248"/>
    </location>
</feature>
<feature type="sequence variant" id="VAR_012670" description="In dbSNP:rs2066842." evidence="6 21 48">
    <original>P</original>
    <variation>S</variation>
    <location>
        <position position="268"/>
    </location>
</feature>
<feature type="sequence variant" id="VAR_012671" description="In dbSNP:rs5743271." evidence="6 21">
    <original>N</original>
    <variation>S</variation>
    <location>
        <position position="289"/>
    </location>
</feature>
<feature type="sequence variant" id="VAR_012672" description="In IBD1; uncertain significance; dbSNP:rs104895424." evidence="6">
    <original>D</original>
    <variation>N</variation>
    <location>
        <position position="291"/>
    </location>
</feature>
<feature type="sequence variant" id="VAR_012673" description="In IBD1; uncertain significance; dbSNP:rs104895425." evidence="6">
    <original>T</original>
    <variation>S</variation>
    <location>
        <position position="294"/>
    </location>
</feature>
<feature type="sequence variant" id="VAR_012674" description="In IBD1; uncertain significance; dbSNP:rs104895426." evidence="6">
    <original>A</original>
    <variation>V</variation>
    <location>
        <position position="301"/>
    </location>
</feature>
<feature type="sequence variant" id="VAR_012675" description="In IBD1; uncertain significance; dbSNP:rs104895427." evidence="6 21">
    <original>R</original>
    <variation>W</variation>
    <location>
        <position position="311"/>
    </location>
</feature>
<feature type="sequence variant" id="VAR_012676" description="In BLAUS; somatic mosaicism in 4.9% to 11% of peripheral blood cells; hyperactive; constitutive NF-kappa-B activation in absence of muramyl dipeptide stimulation; abolishes interaction with LDOC1, ANKHD1, PPP2R3B, ENTR1 and TRIM41; decreases interaction with RIPK2 and PPP1R12C; no effect on interaction with CHMP5; dbSNP:rs104895461." evidence="8 11 24 27 46 48 55">
    <original>R</original>
    <variation>Q</variation>
    <location>
        <position position="334"/>
    </location>
</feature>
<feature type="sequence variant" id="VAR_012677" description="In BLAUS; no disruption of NOD2-CARD9 interaction; hyperactive; constitutive NF-kappa-B activation in absence of muramyl dipeptide stimulation; dbSNP:rs104895462." evidence="8 11 17 24 27 30 45 46">
    <original>R</original>
    <variation>W</variation>
    <location>
        <position position="334"/>
    </location>
</feature>
<feature type="sequence variant" id="VAR_012678" description="In IBD1; uncertain significance; dbSNP:rs104895428." evidence="6">
    <original>L</original>
    <variation>V</variation>
    <location>
        <position position="348"/>
    </location>
</feature>
<feature type="sequence variant" id="VAR_012679" description="In IBD1; uncertain significance; dbSNP:rs5743272." evidence="6">
    <original>H</original>
    <variation>R</variation>
    <location>
        <position position="352"/>
    </location>
</feature>
<feature type="sequence variant" id="VAR_073229" description="In IBD1; uncertain significance; no disruption of NOD2-CARD9 interaction; dbSNP:rs104895469." evidence="14 45">
    <original>D</original>
    <variation>A</variation>
    <location>
        <position position="357"/>
    </location>
</feature>
<feature type="sequence variant" id="VAR_073230" description="In IBD1; uncertain significance; no disruption of NOD2-CARD9 interaction; dbSNP:rs104895470." evidence="14 45">
    <original>I</original>
    <variation>F</variation>
    <location>
        <position position="363"/>
    </location>
</feature>
<feature type="sequence variant" id="VAR_012680" description="In IBD1; uncertain significance; dbSNP:rs145293873." evidence="6">
    <original>R</original>
    <variation>C</variation>
    <location>
        <position position="373"/>
    </location>
</feature>
<feature type="sequence variant" id="VAR_023822" description="In BLAUS; hyperactive; dbSNP:rs104895476." evidence="17 24">
    <original>D</original>
    <variation>E</variation>
    <location>
        <position position="382"/>
    </location>
</feature>
<feature type="sequence variant" id="VAR_073231" description="In BLAUS; uncertain significance; hyperactive; dbSNP:rs104895493." evidence="24 46">
    <original>E</original>
    <variation>G</variation>
    <location>
        <position position="383"/>
    </location>
</feature>
<feature type="sequence variant" id="VAR_023823" description="In BLAUS; hyperactive; dbSNP:rs104895477." evidence="18 27 46">
    <original>E</original>
    <variation>K</variation>
    <location>
        <position position="383"/>
    </location>
</feature>
<feature type="sequence variant" id="VAR_073232" description="In dbSNP:rs104895481." evidence="21">
    <original>R</original>
    <variation>C</variation>
    <location>
        <position position="391"/>
    </location>
</feature>
<feature type="sequence variant" id="VAR_012681" description="In IBD1; uncertain significance; dbSNP:rs104895429." evidence="6">
    <original>N</original>
    <variation>S</variation>
    <location>
        <position position="414"/>
    </location>
</feature>
<feature type="sequence variant" id="VAR_012682" description="In IBD1; uncertain significance; no disruption of NOD2-CARD9 interaction; dbSNP:rs104895431." evidence="6 45">
    <original>S</original>
    <variation>L</variation>
    <location>
        <position position="431"/>
    </location>
</feature>
<feature type="sequence variant" id="VAR_012683" description="In IBD1; uncertain significance; dbSNP:rs2076754." evidence="6">
    <original>A</original>
    <variation>V</variation>
    <location>
        <position position="432"/>
    </location>
</feature>
<feature type="sequence variant" id="VAR_012684" description="In IBD1; uncertain significance; no disruption of NOD2-CARD9 interaction; dbSNP:rs104895432." evidence="6 45">
    <original>E</original>
    <variation>K</variation>
    <location>
        <position position="441"/>
    </location>
</feature>
<feature type="sequence variant" id="VAR_073233" description="No disruption of NOD2-CARD9 interaction; dbSNP:rs104895482." evidence="21 45">
    <original>P</original>
    <variation>A</variation>
    <location>
        <position position="463"/>
    </location>
</feature>
<feature type="sequence variant" id="VAR_073234" description="Hyperactive; dbSNP:rs104895492." evidence="46">
    <original>G</original>
    <variation>W</variation>
    <location>
        <position position="464"/>
    </location>
</feature>
<feature type="sequence variant" id="VAR_012685" description="In BLAUS; hyperactive; constitutive NF-kappa-B activation in absence of muramyl dipeptide stimulation; dbSNP:rs104895460." evidence="8 11 46">
    <original>L</original>
    <variation>F</variation>
    <location>
        <position position="469"/>
    </location>
</feature>
<feature type="sequence variant" id="VAR_036872" description="Does not affect activity; dbSNP:rs1078327." evidence="46">
    <original>R</original>
    <variation>C</variation>
    <location>
        <position position="471"/>
    </location>
</feature>
<feature type="sequence variant" id="VAR_073235" description="In BLAUS; atypical form with cardiac infiltration; sporadic case; uncertain significance; hyperactive; dbSNP:rs104895494." evidence="26 46">
    <original>G</original>
    <variation>D</variation>
    <location>
        <position position="481"/>
    </location>
</feature>
<feature type="sequence variant" id="VAR_073236" description="In BLAUS; uncertain significance; hyperactive; dbSNP:rs104895480." evidence="27 46">
    <original>W</original>
    <variation>L</variation>
    <location>
        <position position="490"/>
    </location>
</feature>
<feature type="sequence variant" id="VAR_073237" description="In BLAUS; uncertain significance; hyperactive; dbSNP:rs104895478." evidence="24 27 46">
    <original>C</original>
    <variation>Y</variation>
    <location>
        <position position="495"/>
    </location>
</feature>
<feature type="sequence variant" id="VAR_023824" description="In BLAUS; hyperactive; dbSNP:rs104895472." evidence="17 24 46">
    <original>H</original>
    <variation>L</variation>
    <location>
        <position position="496"/>
    </location>
</feature>
<feature type="sequence variant" id="VAR_088136" description="In BLAUS; dbSNP:rs1361409611." evidence="62">
    <original>E</original>
    <variation>D</variation>
    <location>
        <position position="498"/>
    </location>
</feature>
<feature type="sequence variant" id="VAR_073180" description="In BLAUS." evidence="47">
    <original>P</original>
    <variation>S</variation>
    <location>
        <position position="507"/>
    </location>
</feature>
<feature type="sequence variant" id="VAR_073238" description="In BLAUS; hyperactive; dbSNP:rs104895473." evidence="17 24 46">
    <original>M</original>
    <variation>T</variation>
    <location>
        <position position="513"/>
    </location>
</feature>
<feature type="sequence variant" id="VAR_073239" description="In IBD1; uncertain significance; no disruption of NOD2-CARD9 interaction; dbSNP:rs104895471." evidence="14 45">
    <original>L</original>
    <variation>V</variation>
    <location>
        <position position="550"/>
    </location>
</feature>
<feature type="sequence variant" id="VAR_073240" description="In BLAUS; uncertain significance; not hyperactive; dbSNP:rs104895479." evidence="27 46">
    <original>R</original>
    <variation>C</variation>
    <location>
        <position position="587"/>
    </location>
</feature>
<feature type="sequence variant" id="VAR_065228" description="In BLAUS; hyperactive." evidence="25 46">
    <original>T</original>
    <variation>N</variation>
    <location>
        <position position="605"/>
    </location>
</feature>
<feature type="sequence variant" id="VAR_073241" description="In BLAUS; hyperactive; dbSNP:rs104895474." evidence="17 24 46">
    <original>T</original>
    <variation>P</variation>
    <location>
        <position position="605"/>
    </location>
</feature>
<feature type="sequence variant" id="VAR_012686" description="In BLAUS and IBD1; uncertain significance; dbSNP:rs104895438." evidence="6 17">
    <original>A</original>
    <variation>T</variation>
    <location>
        <position position="612"/>
    </location>
</feature>
<feature type="sequence variant" id="VAR_012687" description="In IBD1; uncertain significance; no disruption of NOD2-CARD9 interaction; dbSNP:rs104895439." evidence="6 45">
    <original>A</original>
    <variation>V</variation>
    <location>
        <position position="612"/>
    </location>
</feature>
<feature type="sequence variant" id="VAR_073242" description="In BLAUS; hyperactive; dbSNP:rs104895475." evidence="17 24 46">
    <original>N</original>
    <variation>K</variation>
    <location>
        <position position="670"/>
    </location>
</feature>
<feature type="sequence variant" id="VAR_012688" description="In IBD1; uncertain significance; dbSNP:rs5743276." evidence="6">
    <original>R</original>
    <variation>W</variation>
    <location>
        <position position="684"/>
    </location>
</feature>
<feature type="sequence variant" id="VAR_012689" description="In IBD1 and YAOS; associated with disease susceptibility; decreased NF-kappa-B activation in response to muramyl dipeptide stimulation; no disruption of NOD2-CARD9 interaction; decreases half-life of protein; abolishes interaction with ANKHD1, ENTR1 and TRIM41; increases interaction with RIPK2 and PPP2R3B; decreases interaction with LDOC1 and PPP1R12C; no effect on interaction with CHMP5; decreased NF-kappa-B activation in response to muramyl dipeptide stimulation; dbSNP:rs2066844." evidence="6 9 11 16 21 34 44 45 55">
    <original>R</original>
    <variation>W</variation>
    <location>
        <position position="702"/>
    </location>
</feature>
<feature type="sequence variant" id="VAR_012690" description="In IBD1; uncertain significance; dbSNP:rs5743277." evidence="6 21">
    <original>R</original>
    <variation>C</variation>
    <location>
        <position position="703"/>
    </location>
</feature>
<feature type="sequence variant" id="VAR_012691" description="In IBD1; uncertain significance; dbSNP:rs104895440." evidence="6">
    <original>R</original>
    <variation>C</variation>
    <location>
        <position position="713"/>
    </location>
</feature>
<feature type="sequence variant" id="VAR_073243" description="In IBD1; uncertain significance; dbSNP:rs104895483." evidence="21">
    <original>R</original>
    <variation>H</variation>
    <location>
        <position position="713"/>
    </location>
</feature>
<feature type="sequence variant" id="VAR_012692" description="In IBD1; uncertain significance; dbSNP:rs5743278." evidence="6">
    <original>A</original>
    <variation>G</variation>
    <location>
        <position position="725"/>
    </location>
</feature>
<feature type="sequence variant" id="VAR_012693" description="In IBD1; uncertain significance; dbSNP:rs61747625." evidence="6 21">
    <original>A</original>
    <variation>V</variation>
    <location>
        <position position="755"/>
    </location>
</feature>
<feature type="sequence variant" id="VAR_012694" description="In IBD1; uncertain significance; dbSNP:rs104895442." evidence="6">
    <original>A</original>
    <variation>V</variation>
    <location>
        <position position="758"/>
    </location>
</feature>
<feature type="sequence variant" id="VAR_073244" description="In IBD1; uncertain significance; dbSNP:rs3813758." evidence="21">
    <original>R</original>
    <variation>C</variation>
    <location>
        <position position="760"/>
    </location>
</feature>
<feature type="sequence variant" id="VAR_012695" description="In IBD1; uncertain significance; dbSNP:rs104895443." evidence="6">
    <original>E</original>
    <variation>K</variation>
    <location>
        <position position="778"/>
    </location>
</feature>
<feature type="sequence variant" id="VAR_024402" description="In dbSNP:rs5743279.">
    <original>R</original>
    <variation>Q</variation>
    <location>
        <position position="790"/>
    </location>
</feature>
<feature type="sequence variant" id="VAR_073245" description="In IBD1; uncertain significance; dbSNP:rs62029861." evidence="21">
    <original>R</original>
    <variation>W</variation>
    <location>
        <position position="790"/>
    </location>
</feature>
<feature type="sequence variant" id="VAR_073246" description="In dbSNP:rs104895484." evidence="21">
    <original>R</original>
    <variation>W</variation>
    <location>
        <position position="791"/>
    </location>
</feature>
<feature type="sequence variant" id="VAR_012696" description="In IBD1; uncertain significance; abolished pattern recognition receptor activity; dbSNP:rs104895444." evidence="6 15">
    <original>V</original>
    <variation>M</variation>
    <location>
        <position position="793"/>
    </location>
</feature>
<feature type="sequence variant" id="VAR_073247" description="In dbSNP:rs104895485." evidence="21">
    <original>N</original>
    <variation>K</variation>
    <location>
        <position position="825"/>
    </location>
</feature>
<feature type="sequence variant" id="VAR_012697" description="In IBD1; uncertain significance; dbSNP:rs104895445." evidence="6">
    <original>E</original>
    <variation>K</variation>
    <location>
        <position position="843"/>
    </location>
</feature>
<feature type="sequence variant" id="VAR_073248" description="In dbSNP:rs104895486." evidence="21">
    <original>A</original>
    <variation>V</variation>
    <location>
        <position position="849"/>
    </location>
</feature>
<feature type="sequence variant" id="VAR_073249" description="In IBD1; uncertain significance; dbSNP:rs104895467." evidence="14">
    <original>N</original>
    <variation>S</variation>
    <location>
        <position position="852"/>
    </location>
</feature>
<feature type="sequence variant" id="VAR_012698" description="In IBD1; uncertain significance; dbSNP:rs104895446." evidence="6">
    <original>N</original>
    <variation>S</variation>
    <location>
        <position position="853"/>
    </location>
</feature>
<feature type="sequence variant" id="VAR_012699" description="In IBD1; decreased NF-kappa-B activation in response to muramyl dipeptide stimulation; dbSNP:rs104895447." evidence="6 9 11">
    <original>M</original>
    <variation>V</variation>
    <location>
        <position position="863"/>
    </location>
</feature>
<feature type="sequence variant" id="VAR_012700" description="In IBD1; uncertain significance." evidence="6">
    <original>A</original>
    <variation>T</variation>
    <location>
        <position position="885"/>
    </location>
</feature>
<feature type="sequence variant" id="VAR_012701" description="In IBD1 and YAOS; associated with disease susceptibility; decreased NF-kappa-B activation in response to muramyl dipeptide stimulation; decreases half-life of protein; abolishes interaction with ANKHD1, ENTR1 and TRIM41; decreases interaction with RIPK2 and PPP1R12C; no effect on interaction with CHMP5, LDOC1 and PPP2R3B; dbSNP:rs2066845." evidence="5 6 9 16 21 44 50 55">
    <original>G</original>
    <variation>R</variation>
    <location>
        <position position="908"/>
    </location>
</feature>
<feature type="sequence variant" id="VAR_012702" description="In dbSNP:rs104895452." evidence="6">
    <original>A</original>
    <variation>D</variation>
    <location>
        <position position="918"/>
    </location>
</feature>
<feature type="sequence variant" id="VAR_012703" description="In IBD1; uncertain significance; dbSNP:rs104895453." evidence="6">
    <original>G</original>
    <variation>D</variation>
    <location>
        <position position="924"/>
    </location>
</feature>
<feature type="sequence variant" id="VAR_012704" description="In dbSNP:rs5743291." evidence="6">
    <original>V</original>
    <variation>I</variation>
    <location>
        <position position="955"/>
    </location>
</feature>
<feature type="sequence variant" id="VAR_088137" description="In IBD1; abolished NF-kappa-B activation in response to muramyl dipeptide stimulation; decreased localization to the cell membrane." evidence="7 9 11 16 19">
    <original>LERNDTILEVWLRGNTFSLEEVDKLGCRDTRLLL</original>
    <variation>P</variation>
    <location>
        <begin position="1007"/>
        <end position="1040"/>
    </location>
</feature>
<feature type="mutagenesis site" description="Abolished NF-kappa-B activation in response to muramyl dipeptide stimulation. Decreased interaction with RIPK2." evidence="15">
    <original>Q</original>
    <variation>H</variation>
    <location>
        <position position="31"/>
    </location>
</feature>
<feature type="mutagenesis site" description="Abolished NF-kappa-B activation in response to muramyl dipeptide stimulation." evidence="15">
    <original>E</original>
    <variation>K</variation>
    <location>
        <position position="69"/>
    </location>
</feature>
<feature type="mutagenesis site" description="Abolished NF-kappa-B activation in response to muramyl dipeptide stimulation." evidence="15">
    <original>T</original>
    <variation>I</variation>
    <location>
        <position position="91"/>
    </location>
</feature>
<feature type="mutagenesis site" description="Abolished binding to ubiquitin; when associated with R-200." evidence="39">
    <original>I</original>
    <variation>R</variation>
    <location>
        <position position="104"/>
    </location>
</feature>
<feature type="mutagenesis site" description="Abolished NF-kappa-B activation in response to muramyl dipeptide stimulation. Decreased interaction with RIPK2." evidence="15">
    <original>A</original>
    <variation>V</variation>
    <location>
        <position position="106"/>
    </location>
</feature>
<feature type="mutagenesis site" description="Dominant-negative mutant. Abolished NF-kappa-B activation in response to muramyl dipeptide stimulation. Decreased interaction with RIPK2." evidence="15">
    <original>L</original>
    <variation>P</variation>
    <location>
        <position position="145"/>
    </location>
</feature>
<feature type="mutagenesis site" description="Does not affect NF-kappa-B activation in response to muramyl dipeptide stimulation." evidence="15">
    <original>M</original>
    <variation>L</variation>
    <location>
        <position position="152"/>
    </location>
</feature>
<feature type="mutagenesis site" description="Abolished NF-kappa-B activation in response to muramyl dipeptide stimulation." evidence="15">
    <original>P</original>
    <variation>S</variation>
    <location>
        <position position="177"/>
    </location>
</feature>
<feature type="mutagenesis site" description="Abolished NF-kappa-B activation in response to muramyl dipeptide stimulation." evidence="15">
    <original>R</original>
    <variation>K</variation>
    <location>
        <position position="180"/>
    </location>
</feature>
<feature type="mutagenesis site" description="Abolished binding to ubiquitin; when associated with R-104." evidence="39">
    <original>L</original>
    <variation>R</variation>
    <location>
        <position position="200"/>
    </location>
</feature>
<feature type="mutagenesis site" description="Abolished NF-kappa-B activation in response to muramyl dipeptide stimulation." evidence="15">
    <original>A</original>
    <variation>P</variation>
    <location>
        <position position="232"/>
    </location>
</feature>
<feature type="mutagenesis site" description="Abolished NF-kappa-B activation in response to muramyl dipeptide stimulation." evidence="15">
    <original>V</original>
    <variation>E</variation>
    <location>
        <position position="295"/>
    </location>
</feature>
<feature type="mutagenesis site" description="No activation." evidence="5">
    <original>K</original>
    <variation>R</variation>
    <location>
        <position position="305"/>
    </location>
</feature>
<feature type="mutagenesis site" description="Abolished NF-kappa-B activation in response to muramyl dipeptide stimulation." evidence="15">
    <original>F</original>
    <variation>Y</variation>
    <location>
        <position position="327"/>
    </location>
</feature>
<feature type="mutagenesis site" description="Abolished NF-kappa-B activation in response to muramyl dipeptide stimulation." evidence="15">
    <original>C</original>
    <variation>Y</variation>
    <location>
        <position position="333"/>
    </location>
</feature>
<feature type="mutagenesis site" description="Increased NF-kappa-B activation in response to muramyl dipeptide stimulation." evidence="53">
    <original>R</original>
    <variation>A</variation>
    <location>
        <position position="334"/>
    </location>
</feature>
<feature type="mutagenesis site" description="Abolished NF-kappa-B activation in response to muramyl dipeptide stimulation." evidence="15">
    <original>S</original>
    <variation>T</variation>
    <location>
        <position position="344"/>
    </location>
</feature>
<feature type="mutagenesis site" description="No disruption in NOD2-CARD9 interaction. Decreased NF-kappa-B activation in response to muramyl dipeptide stimulation." evidence="15 45">
    <original>D</original>
    <variation>A</variation>
    <location>
        <position position="379"/>
    </location>
</feature>
<feature type="mutagenesis site" description="Abolished palmitoylation and localization to the cell membrane; when associated with S-1033." evidence="60 63 64">
    <original>C</original>
    <variation>S</variation>
    <location>
        <position position="395"/>
    </location>
</feature>
<feature type="mutagenesis site" description="Abolished NF-kappa-B activation in response to muramyl dipeptide stimulation." evidence="15">
    <original>S</original>
    <variation>Y</variation>
    <location>
        <position position="396"/>
    </location>
</feature>
<feature type="mutagenesis site" description="Abolished NF-kappa-B activation in response to muramyl dipeptide stimulation." evidence="15">
    <original>T</original>
    <variation>I</variation>
    <variation>S</variation>
    <location>
        <position position="401"/>
    </location>
</feature>
<feature type="mutagenesis site" description="Abolished NF-kappa-B activation in response to muramyl dipeptide stimulation." evidence="15">
    <original>F</original>
    <variation>L</variation>
    <location>
        <position position="408"/>
    </location>
</feature>
<feature type="mutagenesis site" description="Does not affect NF-kappa-B activation in response to muramyl dipeptide stimulation." evidence="53">
    <original>R</original>
    <variation>A</variation>
    <location>
        <position position="426"/>
    </location>
</feature>
<feature type="mutagenesis site" description="Abolished NF-kappa-B activation in response to muramyl dipeptide stimulation." evidence="15">
    <original>A</original>
    <variation>T</variation>
    <location>
        <position position="429"/>
    </location>
</feature>
<feature type="mutagenesis site" description="Increased NF-kappa-B activation in response to muramyl dipeptide stimulation." evidence="53">
    <original>G</original>
    <variation>A</variation>
    <location>
        <position position="481"/>
    </location>
</feature>
<feature type="mutagenesis site" description="Abolished NF-kappa-B activation in response to muramyl dipeptide stimulation." evidence="15">
    <original>V</original>
    <variation>E</variation>
    <location>
        <position position="492"/>
    </location>
</feature>
<feature type="mutagenesis site" description="Increased NF-kappa-B activation in response to muramyl dipeptide stimulation." evidence="53">
    <original>E</original>
    <variation>A</variation>
    <location>
        <position position="600"/>
    </location>
</feature>
<feature type="mutagenesis site" description="Does not affect NF-kappa-B activation in response to muramyl dipeptide stimulation." evidence="53">
    <original>H</original>
    <variation>A</variation>
    <location>
        <position position="603"/>
    </location>
</feature>
<feature type="mutagenesis site" description="Abolished NF-kappa-B activation in response to muramyl dipeptide stimulation." evidence="15">
    <original>L</original>
    <variation>F</variation>
    <location>
        <position position="626"/>
    </location>
</feature>
<feature type="mutagenesis site" description="Constitutive NF-kappa-B activation; when associated with V-725." evidence="15">
    <original>N</original>
    <variation>I</variation>
    <location>
        <position position="637"/>
    </location>
</feature>
<feature type="mutagenesis site" description="Abolished NF-kappa-B activation in response to muramyl dipeptide stimulation." evidence="15">
    <original>P</original>
    <variation>S</variation>
    <location>
        <position position="639"/>
    </location>
</feature>
<feature type="mutagenesis site" description="Abolished NF-kappa-B activation in response to muramyl dipeptide stimulation." evidence="15">
    <original>K</original>
    <variation>E</variation>
    <location>
        <position position="655"/>
    </location>
</feature>
<feature type="mutagenesis site" description="Constitutive NF-kappa-B activation." evidence="15">
    <original>P</original>
    <variation>H</variation>
    <location>
        <position position="668"/>
    </location>
</feature>
<feature type="mutagenesis site" description="Increased NF-kappa-B activation in response to muramyl dipeptide stimulation." evidence="53">
    <original>N</original>
    <variation>A</variation>
    <location>
        <position position="670"/>
    </location>
</feature>
<feature type="mutagenesis site" description="Constitutive NF-kappa-B activation." evidence="15">
    <original>I</original>
    <variation>F</variation>
    <location>
        <position position="673"/>
    </location>
</feature>
<feature type="mutagenesis site" description="Abolished NF-kappa-B activation in response to muramyl dipeptide stimulation." evidence="15">
    <original>G</original>
    <variation>R</variation>
    <location>
        <position position="680"/>
    </location>
</feature>
<feature type="mutagenesis site" description="Constitutive NF-kappa-B activation; when associated with Y-710." evidence="15">
    <location>
        <position position="680"/>
    </location>
</feature>
<feature type="mutagenesis site" description="Abolished NF-kappa-B activation in response to muramyl dipeptide stimulation." evidence="15">
    <original>L</original>
    <variation>P</variation>
    <location>
        <position position="690"/>
    </location>
</feature>
<feature type="mutagenesis site" description="Abolished NF-kappa-B activation in response to muramyl dipeptide stimulation." evidence="15">
    <original>A</original>
    <variation>T</variation>
    <location>
        <position position="691"/>
    </location>
</feature>
<feature type="mutagenesis site" description="Constitutive NF-kappa-B activation; when associated with R-680." evidence="15">
    <original>C</original>
    <variation>Y</variation>
    <location>
        <position position="710"/>
    </location>
</feature>
<feature type="mutagenesis site" description="Abolished NF-kappa-B activation in response to muramyl dipeptide stimulation." evidence="15">
    <original>S</original>
    <variation>N</variation>
    <location>
        <position position="714"/>
    </location>
</feature>
<feature type="mutagenesis site" description="Constitutive NF-kappa-B activation; when associated with R-731." evidence="15">
    <original>F</original>
    <variation>I</variation>
    <location>
        <position position="719"/>
    </location>
</feature>
<feature type="mutagenesis site" description="Constitutive NF-kappa-B activation; when associated with I-637." evidence="15">
    <original>A</original>
    <variation>V</variation>
    <location>
        <position position="725"/>
    </location>
</feature>
<feature type="mutagenesis site" description="Constitutive NF-kappa-B activation; when associated with I-719." evidence="15">
    <original>K</original>
    <variation>R</variation>
    <location>
        <position position="731"/>
    </location>
</feature>
<feature type="mutagenesis site" description="Abolished NF-kappa-B activation in response to muramyl dipeptide stimulation." evidence="15">
    <original>H</original>
    <variation>L</variation>
    <location>
        <position position="734"/>
    </location>
</feature>
<feature type="mutagenesis site" description="Abolished pattern recognition receptor activity." evidence="15">
    <original>G</original>
    <variation>H</variation>
    <location>
        <position position="761"/>
    </location>
</feature>
<feature type="mutagenesis site" description="Abolished pattern recognition receptor activity." evidence="15">
    <original>L</original>
    <variation>M</variation>
    <location>
        <position position="762"/>
    </location>
</feature>
<feature type="mutagenesis site" description="Does not affect response to muramyl dipeptide (MDP)." evidence="53">
    <original>Y</original>
    <variation>A</variation>
    <location>
        <position position="799"/>
    </location>
</feature>
<feature type="mutagenesis site" description="Abolished pattern recognition receptor activity." evidence="15">
    <original>I</original>
    <variation>N</variation>
    <location>
        <position position="805"/>
    </location>
</feature>
<feature type="mutagenesis site" description="Abolished pattern recognition receptor activity." evidence="15">
    <original>P</original>
    <variation>T</variation>
    <location>
        <position position="812"/>
    </location>
</feature>
<feature type="mutagenesis site" description="Slightly decreased response to muramyl dipeptide (MDP)." evidence="53">
    <original>R</original>
    <variation>A</variation>
    <location>
        <position position="823"/>
    </location>
</feature>
<feature type="mutagenesis site" description="Does not affect response to muramyl dipeptide (MDP)." evidence="53">
    <original>D</original>
    <variation>A</variation>
    <location>
        <position position="824"/>
    </location>
</feature>
<feature type="mutagenesis site" description="Abolished pattern recognition receptor activity." evidence="15">
    <original>D</original>
    <variation>N</variation>
    <location>
        <position position="824"/>
    </location>
</feature>
<feature type="mutagenesis site" description="Decreased response to muramyl dipeptide (MDP)." evidence="53">
    <original>F</original>
    <variation>A</variation>
    <location>
        <position position="851"/>
    </location>
</feature>
<feature type="mutagenesis site" description="Does not affect response to muramyl dipeptide (MDP)." evidence="53">
    <original>N</original>
    <variation>A</variation>
    <location>
        <position position="852"/>
    </location>
</feature>
<feature type="mutagenesis site" description="Abolished pattern recognition receptor activity." evidence="15">
    <original>A</original>
    <variation>G</variation>
    <location>
        <position position="860"/>
    </location>
</feature>
<feature type="mutagenesis site" description="Abolished pattern recognition receptor activity." evidence="15">
    <original>L</original>
    <variation>I</variation>
    <location>
        <position position="876"/>
    </location>
</feature>
<feature type="mutagenesis site" description="Strongly decreased binding to muramyl dipeptide (MDP)." evidence="53 54">
    <original>R</original>
    <variation>A</variation>
    <location>
        <position position="877"/>
    </location>
</feature>
<feature type="mutagenesis site" description="Abolished pattern recognition receptor activity." evidence="15">
    <original>Q</original>
    <variation>P</variation>
    <location>
        <position position="889"/>
    </location>
</feature>
<feature type="mutagenesis site" description="Abolished pattern recognition receptor activity." evidence="15">
    <original>L</original>
    <variation>M</variation>
    <location>
        <position position="891"/>
    </location>
</feature>
<feature type="mutagenesis site" description="Abolished pattern recognition receptor activity." evidence="15">
    <original>A</original>
    <variation>V</variation>
    <location>
        <position position="892"/>
    </location>
</feature>
<feature type="mutagenesis site" description="Abolished pattern recognition receptor activity." evidence="15">
    <original>L</original>
    <variation>M</variation>
    <location>
        <position position="904"/>
    </location>
</feature>
<feature type="mutagenesis site" description="Decreased response to muramyl dipeptide (MDP)." evidence="53">
    <original>G</original>
    <variation>A</variation>
    <location>
        <position position="905"/>
    </location>
</feature>
<feature type="mutagenesis site" description="Decreased response to muramyl dipeptide (MDP)." evidence="53">
    <original>W</original>
    <variation>A</variation>
    <location>
        <position position="907"/>
    </location>
</feature>
<feature type="mutagenesis site" description="Abolished pattern recognition receptor activity." evidence="15">
    <original>D</original>
    <variation>V</variation>
    <location>
        <position position="913"/>
    </location>
</feature>
<feature type="mutagenesis site" description="Abolished pattern recognition receptor activity." evidence="15">
    <original>A</original>
    <variation>T</variation>
    <location>
        <position position="920"/>
    </location>
</feature>
<feature type="mutagenesis site" description="Strongly decreased binding to muramyl dipeptide (MDP)." evidence="53 54">
    <original>W</original>
    <variation>A</variation>
    <location>
        <position position="931"/>
    </location>
</feature>
<feature type="mutagenesis site" description="Decreased binding to muramyl dipeptide (MDP)." evidence="53 54">
    <original>S</original>
    <variation>A</variation>
    <location>
        <position position="933"/>
    </location>
</feature>
<feature type="mutagenesis site" description="Slightly decreased response to muramyl dipeptide (MDP)." evidence="53">
    <original>V</original>
    <variation>A</variation>
    <location>
        <position position="935"/>
    </location>
</feature>
<feature type="mutagenesis site" description="Does not affect response to muramyl dipeptide (MDP)." evidence="53">
    <original>G</original>
    <variation>A</variation>
    <location>
        <position position="936"/>
    </location>
</feature>
<feature type="mutagenesis site" description="Abolished pattern recognition receptor activity." evidence="15">
    <original>A</original>
    <variation>V</variation>
    <location>
        <position position="944"/>
    </location>
</feature>
<feature type="mutagenesis site" description="Abolished pattern recognition receptor activity." evidence="15">
    <original>L</original>
    <variation>M</variation>
    <location>
        <position position="947"/>
    </location>
</feature>
<feature type="mutagenesis site" description="Abolished pattern recognition receptor activity." evidence="15">
    <original>L</original>
    <variation>M</variation>
    <location>
        <position position="949"/>
    </location>
</feature>
<feature type="mutagenesis site" description="Abolished pattern recognition receptor activity." evidence="15">
    <original>M</original>
    <variation>T</variation>
    <location>
        <position position="956"/>
    </location>
</feature>
<feature type="mutagenesis site" description="Does not affect response to muramyl dipeptide (MDP)." evidence="53">
    <original>C</original>
    <variation>A</variation>
    <location>
        <position position="961"/>
    </location>
</feature>
<feature type="mutagenesis site" description="Does not affect response to muramyl dipeptide (MDP)." evidence="53">
    <original>E</original>
    <variation>A</variation>
    <location>
        <position position="964"/>
    </location>
</feature>
<feature type="mutagenesis site" description="Abolished pattern recognition receptor activity." evidence="15">
    <original>Q</original>
    <variation>H</variation>
    <location>
        <position position="968"/>
    </location>
</feature>
<feature type="mutagenesis site" description="Abolished pattern recognition receptor activity." evidence="15">
    <original>G</original>
    <variation>E</variation>
    <location>
        <position position="978"/>
    </location>
</feature>
<feature type="mutagenesis site" description="Abolished pattern recognition receptor activity." evidence="15">
    <original>S</original>
    <variation>T</variation>
    <location>
        <position position="984"/>
    </location>
</feature>
<feature type="mutagenesis site" description="Abolished pattern recognition receptor activity." evidence="15">
    <original>K</original>
    <variation>I</variation>
    <location>
        <position position="986"/>
    </location>
</feature>
<feature type="mutagenesis site" description="Does not affect response to muramyl dipeptide (MDP)." evidence="53">
    <original>N</original>
    <variation>A</variation>
    <location>
        <position position="992"/>
    </location>
</feature>
<feature type="mutagenesis site" description="Abolished pattern recognition receptor activity." evidence="15">
    <original>A</original>
    <variation>S</variation>
    <location>
        <position position="1002"/>
    </location>
</feature>
<feature type="mutagenesis site" description="Abolished localization to the cell membrane." evidence="19">
    <original>WLR</original>
    <variation>GGG</variation>
    <location>
        <begin position="1017"/>
        <end position="1019"/>
    </location>
</feature>
<feature type="mutagenesis site" description="Decreased ability to promote NF-kappa-B activation." evidence="19">
    <original>W</original>
    <variation>G</variation>
    <location>
        <position position="1017"/>
    </location>
</feature>
<feature type="mutagenesis site" description="Decreased ability to promote NF-kappa-B activation." evidence="19">
    <original>L</original>
    <variation>G</variation>
    <location>
        <position position="1018"/>
    </location>
</feature>
<feature type="mutagenesis site" description="Does not affect ability to promote NF-kappa-B activation." evidence="19">
    <original>R</original>
    <variation>G</variation>
    <location>
        <position position="1019"/>
    </location>
</feature>
<feature type="mutagenesis site" description="Abolished palmitoylation and localization to the cell membrane; when associated with S-395." evidence="60 63 64">
    <original>C</original>
    <variation>S</variation>
    <location>
        <position position="1033"/>
    </location>
</feature>
<feature type="mutagenesis site" description="Abolished localization to the cell membrane." evidence="19">
    <original>LL</original>
    <variation>GG</variation>
    <location>
        <begin position="1039"/>
        <end position="1040"/>
    </location>
</feature>
<feature type="sequence variant" id="VAR_088138" description="Increased palmitoylation and protein stability, leading to constitutive NF-kappa-B activation; dbSNP:rs1078327." evidence="64">
    <original>R</original>
    <variation>C</variation>
    <location sequence="Q9HC29-2">
        <position position="444"/>
    </location>
</feature>
<name>NOD2_HUMAN</name>
<accession>Q9HC29</accession>
<accession>E2JEQ6</accession>
<accession>Q96RH5</accession>
<accession>Q96RH6</accession>
<accession>Q96RH8</accession>
<evidence type="ECO:0000250" key="1">
    <source>
        <dbReference type="UniProtKB" id="G1T469"/>
    </source>
</evidence>
<evidence type="ECO:0000250" key="2">
    <source>
        <dbReference type="UniProtKB" id="Q8K3Z0"/>
    </source>
</evidence>
<evidence type="ECO:0000255" key="3">
    <source>
        <dbReference type="PROSITE-ProRule" id="PRU00046"/>
    </source>
</evidence>
<evidence type="ECO:0000255" key="4">
    <source>
        <dbReference type="PROSITE-ProRule" id="PRU00136"/>
    </source>
</evidence>
<evidence type="ECO:0000269" key="5">
    <source>
    </source>
</evidence>
<evidence type="ECO:0000269" key="6">
    <source>
    </source>
</evidence>
<evidence type="ECO:0000269" key="7">
    <source>
    </source>
</evidence>
<evidence type="ECO:0000269" key="8">
    <source>
    </source>
</evidence>
<evidence type="ECO:0000269" key="9">
    <source>
    </source>
</evidence>
<evidence type="ECO:0000269" key="10">
    <source>
    </source>
</evidence>
<evidence type="ECO:0000269" key="11">
    <source>
    </source>
</evidence>
<evidence type="ECO:0000269" key="12">
    <source>
    </source>
</evidence>
<evidence type="ECO:0000269" key="13">
    <source>
    </source>
</evidence>
<evidence type="ECO:0000269" key="14">
    <source>
    </source>
</evidence>
<evidence type="ECO:0000269" key="15">
    <source>
    </source>
</evidence>
<evidence type="ECO:0000269" key="16">
    <source>
    </source>
</evidence>
<evidence type="ECO:0000269" key="17">
    <source>
    </source>
</evidence>
<evidence type="ECO:0000269" key="18">
    <source>
    </source>
</evidence>
<evidence type="ECO:0000269" key="19">
    <source>
    </source>
</evidence>
<evidence type="ECO:0000269" key="20">
    <source>
    </source>
</evidence>
<evidence type="ECO:0000269" key="21">
    <source>
    </source>
</evidence>
<evidence type="ECO:0000269" key="22">
    <source>
    </source>
</evidence>
<evidence type="ECO:0000269" key="23">
    <source>
    </source>
</evidence>
<evidence type="ECO:0000269" key="24">
    <source>
    </source>
</evidence>
<evidence type="ECO:0000269" key="25">
    <source>
    </source>
</evidence>
<evidence type="ECO:0000269" key="26">
    <source>
    </source>
</evidence>
<evidence type="ECO:0000269" key="27">
    <source>
    </source>
</evidence>
<evidence type="ECO:0000269" key="28">
    <source>
    </source>
</evidence>
<evidence type="ECO:0000269" key="29">
    <source>
    </source>
</evidence>
<evidence type="ECO:0000269" key="30">
    <source>
    </source>
</evidence>
<evidence type="ECO:0000269" key="31">
    <source>
    </source>
</evidence>
<evidence type="ECO:0000269" key="32">
    <source>
    </source>
</evidence>
<evidence type="ECO:0000269" key="33">
    <source>
    </source>
</evidence>
<evidence type="ECO:0000269" key="34">
    <source>
    </source>
</evidence>
<evidence type="ECO:0000269" key="35">
    <source>
    </source>
</evidence>
<evidence type="ECO:0000269" key="36">
    <source>
    </source>
</evidence>
<evidence type="ECO:0000269" key="37">
    <source>
    </source>
</evidence>
<evidence type="ECO:0000269" key="38">
    <source>
    </source>
</evidence>
<evidence type="ECO:0000269" key="39">
    <source>
    </source>
</evidence>
<evidence type="ECO:0000269" key="40">
    <source>
    </source>
</evidence>
<evidence type="ECO:0000269" key="41">
    <source>
    </source>
</evidence>
<evidence type="ECO:0000269" key="42">
    <source>
    </source>
</evidence>
<evidence type="ECO:0000269" key="43">
    <source>
    </source>
</evidence>
<evidence type="ECO:0000269" key="44">
    <source>
    </source>
</evidence>
<evidence type="ECO:0000269" key="45">
    <source>
    </source>
</evidence>
<evidence type="ECO:0000269" key="46">
    <source>
    </source>
</evidence>
<evidence type="ECO:0000269" key="47">
    <source>
    </source>
</evidence>
<evidence type="ECO:0000269" key="48">
    <source>
    </source>
</evidence>
<evidence type="ECO:0000269" key="49">
    <source>
    </source>
</evidence>
<evidence type="ECO:0000269" key="50">
    <source>
    </source>
</evidence>
<evidence type="ECO:0000269" key="51">
    <source>
    </source>
</evidence>
<evidence type="ECO:0000269" key="52">
    <source>
    </source>
</evidence>
<evidence type="ECO:0000269" key="53">
    <source>
    </source>
</evidence>
<evidence type="ECO:0000269" key="54">
    <source>
    </source>
</evidence>
<evidence type="ECO:0000269" key="55">
    <source>
    </source>
</evidence>
<evidence type="ECO:0000269" key="56">
    <source>
    </source>
</evidence>
<evidence type="ECO:0000269" key="57">
    <source>
    </source>
</evidence>
<evidence type="ECO:0000269" key="58">
    <source>
    </source>
</evidence>
<evidence type="ECO:0000269" key="59">
    <source>
    </source>
</evidence>
<evidence type="ECO:0000269" key="60">
    <source>
    </source>
</evidence>
<evidence type="ECO:0000269" key="61">
    <source>
    </source>
</evidence>
<evidence type="ECO:0000269" key="62">
    <source>
    </source>
</evidence>
<evidence type="ECO:0000269" key="63">
    <source>
    </source>
</evidence>
<evidence type="ECO:0000269" key="64">
    <source>
    </source>
</evidence>
<evidence type="ECO:0000269" key="65">
    <source>
    </source>
</evidence>
<evidence type="ECO:0000269" key="66">
    <source>
    </source>
</evidence>
<evidence type="ECO:0000303" key="67">
    <source>
    </source>
</evidence>
<evidence type="ECO:0000303" key="68">
    <source>
    </source>
</evidence>
<evidence type="ECO:0000303" key="69">
    <source>
    </source>
</evidence>
<evidence type="ECO:0000303" key="70">
    <source>
    </source>
</evidence>
<evidence type="ECO:0000305" key="71"/>
<evidence type="ECO:0000312" key="72">
    <source>
        <dbReference type="HGNC" id="HGNC:5331"/>
    </source>
</evidence>
<proteinExistence type="evidence at protein level"/>
<reference key="1">
    <citation type="journal article" date="2001" name="J. Biol. Chem.">
        <title>Nod2, a Nod1/Apaf-1 family member that is restricted to monocytes and activates NF-kappaB.</title>
        <authorList>
            <person name="Ogura Y."/>
            <person name="Inohara N."/>
            <person name="Benito A."/>
            <person name="Chen F.F."/>
            <person name="Yamaoka S."/>
            <person name="Nunez G."/>
        </authorList>
    </citation>
    <scope>NUCLEOTIDE SEQUENCE [MRNA] (ISOFORMS 1 AND 2)</scope>
    <scope>MUTAGENESIS OF LYS-305</scope>
    <scope>VARIANT ARG-908</scope>
    <scope>FUNCTION</scope>
    <scope>SUBUNIT</scope>
    <scope>INTERACTION WITH RIPK2</scope>
    <scope>TISSUE SPECIFICITY</scope>
    <source>
        <tissue>Mammary gland</tissue>
    </source>
</reference>
<reference key="2">
    <citation type="journal article" date="2001" name="Nature">
        <title>Association of NOD2 leucine-rich repeat variants with susceptibility to Crohn's disease.</title>
        <authorList>
            <person name="Hugot J.-P."/>
            <person name="Chamaillard M."/>
            <person name="Zouali H."/>
            <person name="Lesage S."/>
            <person name="Cezard J.-P."/>
            <person name="Belaiche J."/>
            <person name="Almer S."/>
            <person name="Tysk C."/>
            <person name="O'Morain C.A."/>
            <person name="Gassull M."/>
            <person name="Binder V."/>
            <person name="Finkel Y."/>
            <person name="Cortot A."/>
            <person name="Modigliani R."/>
            <person name="Laurent-Puig P."/>
            <person name="Gower-Rousseau C."/>
            <person name="Macry J."/>
            <person name="Colombel J.-F."/>
            <person name="Sahbatou M."/>
            <person name="Thomas G."/>
        </authorList>
    </citation>
    <scope>NUCLEOTIDE SEQUENCE [GENOMIC DNA] (ISOFORMS 1 AND 2)</scope>
    <scope>INVOLVEMENT IN IBD1</scope>
    <scope>VARIANTS IBD1 THR-140; ARG-157; CYS-235; ARG-248; ASN-291; SER-294; VAL-301; TRP-311; VAL-348; ARG-352; CYS-373; SER-414; LEU-431; VAL-432; LYS-441; THR-612; VAL-612; TRP-684; TRP-702; CYS-703; CYS-713; GLY-725; VAL-755; VAL-758; LYS-778; MET-793; LYS-843; SER-853; VAL-863; THR-885; ARG-908 AND ASP-924</scope>
    <scope>VARIANTS MET-189; SER-268; SER-289; ASP-918 AND ILE-955</scope>
    <source>
        <tissue>Leukocyte</tissue>
    </source>
</reference>
<reference key="3">
    <citation type="journal article" date="2010" name="BMC Res. Notes">
        <title>NOD2-C2 - a novel NOD2 isoform activating NF-kappaB in a muramyl dipeptide-independent manner.</title>
        <authorList>
            <person name="Kramer M."/>
            <person name="Boeck J."/>
            <person name="Reichenbach D."/>
            <person name="Kaether C."/>
            <person name="Schreiber S."/>
            <person name="Platzer M."/>
            <person name="Rosenstiel P."/>
            <person name="Huse K."/>
        </authorList>
    </citation>
    <scope>NUCLEOTIDE SEQUENCE [MRNA] (ISOFORM 3)</scope>
    <scope>FUNCTION (ISOFORM 3)</scope>
</reference>
<reference key="4">
    <citation type="journal article" date="2003" name="Gut">
        <title>Expression of NOD2 in Paneth cells: a possible link to Crohn's ileitis.</title>
        <authorList>
            <person name="Ogura Y."/>
            <person name="Lala S."/>
            <person name="Xin W."/>
            <person name="Smith E."/>
            <person name="Dowds T.A."/>
            <person name="Chen F.F."/>
            <person name="Zimmermann E."/>
            <person name="Tretiakova M."/>
            <person name="Cho J.H."/>
            <person name="Hart J."/>
            <person name="Greenson J.K."/>
            <person name="Keshav S."/>
            <person name="Nunez G."/>
        </authorList>
    </citation>
    <scope>SUBCELLULAR LOCATION</scope>
    <scope>TISSUE SPECIFICITY</scope>
</reference>
<reference key="5">
    <citation type="journal article" date="2003" name="J. Biol. Chem.">
        <title>Host recognition of bacterial muramyl dipeptide mediated through NOD2. Implications for Crohn's disease.</title>
        <authorList>
            <person name="Inohara N."/>
            <person name="Ogura Y."/>
            <person name="Fontalba A."/>
            <person name="Gutierrez O."/>
            <person name="Pons F."/>
            <person name="Crespo J."/>
            <person name="Fukase K."/>
            <person name="Inamura S."/>
            <person name="Kusumoto S."/>
            <person name="Hashimoto M."/>
            <person name="Foster S.J."/>
            <person name="Moran A.P."/>
            <person name="Fernandez-Luna J.L."/>
            <person name="Nunez G."/>
        </authorList>
    </citation>
    <scope>FUNCTION</scope>
    <scope>VARIANTS IBD1 TRP-702; ARG-908 AND 1007-LEU--LEU-1040 DELINS PRO</scope>
    <scope>CHARACTERIZATION OF VARIANTS IBD1 TRP-702; ARG-908 AND 1007-LEU--LEU-1040 DELINS PRO</scope>
</reference>
<reference key="6">
    <citation type="journal article" date="2003" name="J. Biol. Chem.">
        <title>Nod2 is a general sensor of peptidoglycan through muramyl dipeptide (MDP) detection.</title>
        <authorList>
            <person name="Girardin S.E."/>
            <person name="Boneca I.G."/>
            <person name="Viala J."/>
            <person name="Chamaillard M."/>
            <person name="Labigne A."/>
            <person name="Thomas G."/>
            <person name="Philpott D.J."/>
            <person name="Sansonetti P.J."/>
        </authorList>
    </citation>
    <scope>FUNCTION</scope>
</reference>
<reference key="7">
    <citation type="journal article" date="2003" name="J. Biol. Chem.">
        <title>Peptidoglycan molecular requirements allowing detection by Nod1 and Nod2.</title>
        <authorList>
            <person name="Girardin S.E."/>
            <person name="Travassos L.H."/>
            <person name="Herve M."/>
            <person name="Blanot D."/>
            <person name="Boneca I.G."/>
            <person name="Philpott D.J."/>
            <person name="Sansonetti P.J."/>
            <person name="Mengin-Lecreulx D."/>
        </authorList>
    </citation>
    <scope>FUNCTION</scope>
</reference>
<reference key="8">
    <citation type="journal article" date="2003" name="Proc. Natl. Acad. Sci. U.S.A.">
        <title>Gene-environment interaction modulated by allelic heterogeneity in inflammatory diseases.</title>
        <authorList>
            <person name="Chamaillard M."/>
            <person name="Philpott D."/>
            <person name="Girardin S.E."/>
            <person name="Zouali H."/>
            <person name="Lesage S."/>
            <person name="Chareyre F."/>
            <person name="Bui T.H."/>
            <person name="Giovannini M."/>
            <person name="Zaehringer U."/>
            <person name="Penard-Lacronique V."/>
            <person name="Sansonetti P.J."/>
            <person name="Hugot J.P."/>
            <person name="Thomas G."/>
        </authorList>
    </citation>
    <scope>FUNCTION</scope>
    <scope>VARIANTS BLAUS GLN-334; TRP-334 AND PHE-469</scope>
    <scope>VARIANTS IBD1 TRP-702; VAL-863 AND 1007-LEU--LEU-1040 DELINS PRO</scope>
    <scope>CHARACTERIZATION OF VARIANTS BLAUS GLN-334; TRP-334 AND PHE-469</scope>
    <scope>CHARACTERIZATION OF VARIANTS IBD1 TRP-702; VAL-863 AND 1007-LEU--LEU-1040 DELINS PRO</scope>
</reference>
<reference key="9">
    <citation type="journal article" date="2004" name="EMBO J.">
        <title>Regulatory regions and critical residues of NOD2 involved in muramyl dipeptide recognition.</title>
        <authorList>
            <person name="Tanabe T."/>
            <person name="Chamaillard M."/>
            <person name="Ogura Y."/>
            <person name="Zhu L."/>
            <person name="Qiu S."/>
            <person name="Masumoto J."/>
            <person name="Ghosh P."/>
            <person name="Moran A."/>
            <person name="Predergast M.M."/>
            <person name="Tromp G."/>
            <person name="Williams C.J."/>
            <person name="Inohara N."/>
            <person name="Nunez G."/>
        </authorList>
    </citation>
    <scope>FUNCTION</scope>
    <scope>INTERACTION WITH RIPK2</scope>
    <scope>CHARACTERIZATION OF VARIANT IBD1 MET-793</scope>
    <scope>MUTAGENESIS OF GLN-31; GLU-69; THR-91; ALA-106; LEU-145; MET-152; PRO-177; ARG-180; ALA-232; VAL-295; PHE-327; CYS-333; SER-344; ASP-379; SER-396; THR-401; PHE-408; ALA-429; VAL-492; LEU-626; ASN-637; PRO-639; LYS-655; PRO-668; ILE-673; GLY-680; LEU-690; ALA-691; CYS-710; SER-714; PHE-719; ALA-725; LYS-731; HIS-734; GLY-761; LEU-762; ILE-805; PRO-812; ASP-824; ALA-860; LEU-876; GLN-889; LEU-891; ALA-892; LEU-904; ASP-913; ALA-920; ALA-944; LEU-947; LEU-949; MET-956; GLN-968; GLY-978; SER-984; LYS-986 AND ALA-1002</scope>
</reference>
<reference key="10">
    <citation type="journal article" date="2005" name="J. Cell Biol.">
        <title>Membrane recruitment of NOD2 in intestinal epithelial cells is essential for nuclear factor-{kappa}B activation in muramyl dipeptide recognition.</title>
        <authorList>
            <person name="Barnich N."/>
            <person name="Aguirre J.E."/>
            <person name="Reinecker H.C."/>
            <person name="Xavier R."/>
            <person name="Podolsky D.K."/>
        </authorList>
    </citation>
    <scope>FUNCTION</scope>
    <scope>SUBCELLULAR LOCATION</scope>
    <scope>CHARACTERIZATION OF VARIANT IBD1 1007-LEU--LEU-1040 DELINS PRO</scope>
    <scope>MUTAGENESIS OF 1017-TRP--ARG-1019; TRP-1017; LEU-1018; ARG-1019 AND 1039-LEU-LEU-1040</scope>
</reference>
<reference key="11">
    <citation type="journal article" date="2005" name="J. Biol. Chem.">
        <title>A role for Erbin in the regulation of Nod2-dependent NF-kappaB signaling.</title>
        <authorList>
            <person name="McDonald C."/>
            <person name="Chen F.F."/>
            <person name="Ollendorff V."/>
            <person name="Ogura Y."/>
            <person name="Marchetto S."/>
            <person name="Lecine P."/>
            <person name="Borg J.P."/>
            <person name="Nunez G."/>
        </authorList>
    </citation>
    <scope>INTERACTION WITH ERBIN</scope>
    <scope>SUBCELLULAR LOCATION</scope>
</reference>
<reference key="12">
    <citation type="journal article" date="2007" name="J. Biol. Chem.">
        <title>The NOD2-RICK complex signals from the plasma membrane.</title>
        <authorList>
            <person name="Lecine P."/>
            <person name="Esmiol S."/>
            <person name="Metais J.Y."/>
            <person name="Nicoletti C."/>
            <person name="Nourry C."/>
            <person name="McDonald C."/>
            <person name="Nunez G."/>
            <person name="Hugot J.P."/>
            <person name="Borg J.P."/>
            <person name="Ollendorff V."/>
        </authorList>
    </citation>
    <scope>FUNCTION</scope>
    <scope>SUBCELLULAR LOCATION</scope>
    <scope>INTERACTION WITH RIPK2</scope>
</reference>
<reference key="13">
    <citation type="journal article" date="2008" name="Proc. Natl. Acad. Sci. U.S.A.">
        <title>A NOD2-NALP1 complex mediates caspase-1-dependent IL-1beta secretion in response to Bacillus anthracis infection and muramyl dipeptide.</title>
        <authorList>
            <person name="Hsu L.C."/>
            <person name="Ali S.R."/>
            <person name="McGillivray S."/>
            <person name="Tseng P.H."/>
            <person name="Mariathasan S."/>
            <person name="Humke E.W."/>
            <person name="Eckmann L."/>
            <person name="Powell J.J."/>
            <person name="Nizet V."/>
            <person name="Dixit V.M."/>
            <person name="Karin M."/>
        </authorList>
    </citation>
    <scope>FUNCTION</scope>
    <scope>INTERACTION WITH CASP1; CASP4 AND NLRP1</scope>
    <scope>AUTOINHIBITION</scope>
    <scope>DOMAIN</scope>
</reference>
<reference key="14">
    <citation type="journal article" date="2009" name="Curr. Biol.">
        <title>ITCH K63-ubiquitinates the NOD2 binding protein, RIP2, to influence inflammatory signaling pathways.</title>
        <authorList>
            <person name="Tao M."/>
            <person name="Scacheri P.C."/>
            <person name="Marinis J.M."/>
            <person name="Harhaj E.W."/>
            <person name="Matesic L.E."/>
            <person name="Abbott D.W."/>
        </authorList>
    </citation>
    <scope>INTERACTION WITH RIPK2</scope>
</reference>
<reference key="15">
    <citation type="journal article" date="2009" name="Nat. Immunol.">
        <title>Activation of innate immune antiviral responses by Nod2.</title>
        <authorList>
            <person name="Sabbah A."/>
            <person name="Chang T.H."/>
            <person name="Harnack R."/>
            <person name="Frohlich V."/>
            <person name="Tominaga K."/>
            <person name="Dube P.H."/>
            <person name="Xiang Y."/>
            <person name="Bose S."/>
        </authorList>
    </citation>
    <scope>FUNCTION</scope>
    <scope>SUBCELLULAR LOCATION</scope>
    <scope>INTERACTION WITH MAVS</scope>
</reference>
<reference key="16">
    <citation type="journal article" date="2010" name="Gastroenterology">
        <title>ATG16L1 and NOD2 interact in an autophagy-dependent antibacterial pathway implicated in Crohn's disease pathogenesis.</title>
        <authorList>
            <person name="Homer C.R."/>
            <person name="Richmond A.L."/>
            <person name="Rebert N.A."/>
            <person name="Achkar J.P."/>
            <person name="McDonald C."/>
        </authorList>
    </citation>
    <scope>FUNCTION</scope>
    <scope>INTERACTION WITH ATG16L1</scope>
</reference>
<reference key="17">
    <citation type="journal article" date="2012" name="Inflamm. Bowel Dis.">
        <title>Control of NOD2 and Rip2-dependent innate immune activation by GEF-H1.</title>
        <authorList>
            <person name="Zhao Y."/>
            <person name="Alonso C."/>
            <person name="Ballester I."/>
            <person name="Song J.H."/>
            <person name="Chang S.Y."/>
            <person name="Guleng B."/>
            <person name="Arihiro S."/>
            <person name="Murray P.J."/>
            <person name="Xavier R."/>
            <person name="Kobayashi K.S."/>
            <person name="Reinecker H.C."/>
        </authorList>
    </citation>
    <scope>IDENTIFICATION IN A COMPLEX WITH ARHGEF2 AND RIPK2</scope>
    <scope>INTERACTION WITH RIPK2</scope>
</reference>
<reference key="18">
    <citation type="journal article" date="2012" name="J. Am. Chem. Soc.">
        <title>The innate immune protein Nod2 binds directly to MDP, a bacterial cell wall fragment.</title>
        <authorList>
            <person name="Grimes C.L."/>
            <person name="Ariyananda L.D.Z."/>
            <person name="Melnyk J.E."/>
            <person name="O'Shea E.K."/>
        </authorList>
    </citation>
    <scope>FUNCTION</scope>
</reference>
<reference key="19">
    <citation type="journal article" date="2012" name="J. Biol. Chem.">
        <title>The c-Jun N-terminal kinase (JNK)-binding protein (JNKBP1) acts as a negative regulator of NOD2 protein signaling by inhibiting its oligomerization process.</title>
        <authorList>
            <person name="Lecat A."/>
            <person name="Di Valentin E."/>
            <person name="Somja J."/>
            <person name="Jourdan S."/>
            <person name="Fillet M."/>
            <person name="Kufer T.A."/>
            <person name="Habraken Y."/>
            <person name="Sadzot C."/>
            <person name="Louis E."/>
            <person name="Delvenne P."/>
            <person name="Piette J."/>
            <person name="Legrand-Poels S."/>
        </authorList>
    </citation>
    <scope>TISSUE SPECIFICITY</scope>
    <scope>SUBUNIT</scope>
    <scope>INTERACTION WITH MAPKBP1</scope>
</reference>
<reference key="20">
    <citation type="journal article" date="2012" name="J. Biol. Chem.">
        <title>Proteasomal degradation of Nod2 protein mediates tolerance to bacterial cell wall components.</title>
        <authorList>
            <person name="Lee K.H."/>
            <person name="Biswas A."/>
            <person name="Liu Y.J."/>
            <person name="Kobayashi K.S."/>
        </authorList>
    </citation>
    <scope>INTERACTION WITH HSP90 AND SOCS3</scope>
    <scope>POLYUBIQUITINATION</scope>
</reference>
<reference key="21">
    <citation type="journal article" date="2012" name="PLoS ONE">
        <title>TRIM27 negatively regulates NOD2 by ubiquitination and proteasomal degradation.</title>
        <authorList>
            <person name="Zurek B."/>
            <person name="Schoultz I."/>
            <person name="Neerincx A."/>
            <person name="Napolitano L.M."/>
            <person name="Birkner K."/>
            <person name="Bennek E."/>
            <person name="Sellge G."/>
            <person name="Lerm M."/>
            <person name="Meroni G."/>
            <person name="Soederholm J.D."/>
            <person name="Kufer T.A."/>
        </authorList>
    </citation>
    <scope>UBIQUITINATION BY TRIM27</scope>
</reference>
<reference key="22">
    <citation type="journal article" date="2013" name="EMBO J.">
        <title>TMEM59 defines a novel ATG16L1-binding motif that promotes local activation of LC3.</title>
        <authorList>
            <person name="Boada-Romero E."/>
            <person name="Letek M."/>
            <person name="Fleischer A."/>
            <person name="Pallauf K."/>
            <person name="Ramon-Barros C."/>
            <person name="Pimentel-Muinos F.X."/>
        </authorList>
    </citation>
    <scope>INTERACTION WITH ATG16L1</scope>
</reference>
<reference key="23">
    <citation type="journal article" date="2013" name="FEBS Lett.">
        <title>A role for the Ankyrin repeat containing protein Ankrd17 in Nod1- and Nod2-mediated inflammatory responses.</title>
        <authorList>
            <person name="Menning M."/>
            <person name="Kufer T.A."/>
        </authorList>
    </citation>
    <scope>INTERACTION WITH ANKRD17</scope>
</reference>
<reference key="24">
    <citation type="journal article" date="2013" name="Mol. Cell">
        <title>OTULIN restricts Met1-linked ubiquitination to control innate immune signaling.</title>
        <authorList>
            <person name="Fiil B.K."/>
            <person name="Damgaard R.B."/>
            <person name="Wagner S.A."/>
            <person name="Keusekotten K."/>
            <person name="Fritsch M."/>
            <person name="Bekker-Jensen S."/>
            <person name="Mailand N."/>
            <person name="Choudhary C."/>
            <person name="Komander D."/>
            <person name="Gyrd-Hansen M."/>
        </authorList>
    </citation>
    <scope>FUNCTION</scope>
</reference>
<reference key="25">
    <citation type="journal article" date="2013" name="Sci. Signal.">
        <title>A genome-wide siRNA screen reveals positive and negative regulators of the NOD2 and NF-kappaB signaling pathways.</title>
        <authorList>
            <person name="Warner N."/>
            <person name="Burberry A."/>
            <person name="Franchi L."/>
            <person name="Kim Y.G."/>
            <person name="McDonald C."/>
            <person name="Sartor M.A."/>
            <person name="Nunez G."/>
        </authorList>
    </citation>
    <scope>FUNCTION</scope>
</reference>
<reference key="26">
    <citation type="journal article" date="2014" name="FEBS Lett.">
        <title>Interaction between NOD2 and CARD9 involves the NOD2 NACHT and the linker region between the NOD2 CARDs and NACHT domain.</title>
        <authorList>
            <person name="Parkhouse R."/>
            <person name="Boyle J.P."/>
            <person name="Mayle S."/>
            <person name="Sawmynaden K."/>
            <person name="Rittinger K."/>
            <person name="Monie T.P."/>
        </authorList>
    </citation>
    <scope>INTERACTION WITH CARD9</scope>
    <scope>VARIANTS IBD1 ALA-357; PHE-363 AND VAL-550</scope>
    <scope>VARIANT ALA-463</scope>
    <scope>CHARACTERIZATION OF VARIANTS IBD1 ARG-248; ALA-357; PHE-363; LEU-431; LYS-441; VAL-550; VAL-612 AND TRP-702</scope>
    <scope>CHARACTERIZATION OF VARIANT BLAUS TRP-334</scope>
    <scope>CHARACTERIZATION OF VARIANT ALA-463</scope>
    <scope>MUTAGENESIS OF ASP-379</scope>
</reference>
<reference key="27">
    <citation type="journal article" date="2014" name="FEBS Lett.">
        <title>Blau syndrome polymorphisms in NOD2 identify nucleotide hydrolysis and helical domain 1 as signalling regulators.</title>
        <authorList>
            <person name="Parkhouse R."/>
            <person name="Boyle J.P."/>
            <person name="Monie T.P."/>
        </authorList>
    </citation>
    <scope>SUBCELLULAR LOCATION</scope>
    <scope>CHARACTERIZATION OF VARIANTS BLAUS GLN-334; TRP-334; GLY-383; LYS-383; PHE-469; ASP-481; LEU-490; TYR-495; LEU-496; THR-513; CYS-587; ASN-605; PRO-605 AND LYS-670</scope>
    <scope>CHARACTERIZATION OF VARIANTS AND CYS-471</scope>
</reference>
<reference key="28">
    <citation type="journal article" date="2014" name="J. Biol. Chem.">
        <title>The molecular chaperone HSP70 binds to and stabilizes NOD2, an important protein involved in Crohn disease.</title>
        <authorList>
            <person name="Mohanan V."/>
            <person name="Grimes C.L."/>
        </authorList>
    </citation>
    <scope>INTERACTION WITH HSPA1A</scope>
    <scope>SUBCELLULAR LOCATION</scope>
    <scope>CHARACTERIZATION OF VARIANTS IBD1 TRP-702 AND ARG-908</scope>
</reference>
<reference key="29">
    <citation type="journal article" date="2015" name="Mol. Cell">
        <title>IRGM governs the core autophagy machinery to conduct antimicrobial defense.</title>
        <authorList>
            <person name="Chauhan S."/>
            <person name="Mandell M.A."/>
            <person name="Deretic V."/>
        </authorList>
    </citation>
    <scope>INTERACTION WITH IRGM</scope>
</reference>
<reference key="30">
    <citation type="journal article" date="2016" name="Glycobiology">
        <title>Identification and biological consequences of the O-GlcNAc modification of the human innate immune receptor, Nod2.</title>
        <authorList>
            <person name="Hou C.W."/>
            <person name="Mohanan V."/>
            <person name="Zachara N.E."/>
            <person name="Grimes C.L."/>
        </authorList>
    </citation>
    <scope>GLYCOSYLATION</scope>
</reference>
<reference key="31">
    <citation type="journal article" date="2016" name="Nature">
        <title>NOD1 and NOD2 signalling links ER stress with inflammation.</title>
        <authorList>
            <person name="Keestra-Gounder A.M."/>
            <person name="Byndloss M.X."/>
            <person name="Seyffert N."/>
            <person name="Young B.M."/>
            <person name="Chavez-Arroyo A."/>
            <person name="Tsai A.Y."/>
            <person name="Cevallos S.A."/>
            <person name="Winter M.G."/>
            <person name="Pham O.H."/>
            <person name="Tiffany C.R."/>
            <person name="de Jong M.F."/>
            <person name="Kerrinnes T."/>
            <person name="Ravindran R."/>
            <person name="Luciw P.A."/>
            <person name="McSorley S.J."/>
            <person name="Baeumler A.J."/>
            <person name="Tsolis R.M."/>
        </authorList>
    </citation>
    <scope>FUNCTION</scope>
    <scope>INTERACTION WITH RIPK2</scope>
</reference>
<reference key="32">
    <citation type="journal article" date="2016" name="Nat. Commun.">
        <title>Crystal structure of NOD2 and its implications in human disease.</title>
        <authorList>
            <person name="Maekawa S."/>
            <person name="Ohto U."/>
            <person name="Shibata T."/>
            <person name="Miyake K."/>
            <person name="Shimizu T."/>
        </authorList>
    </citation>
    <scope>FUNCTION</scope>
    <scope>MUTAGENESIS OF ARG-334; ARG-426; GLY-481; GLU-600; HIS-603; ASN-670; TYR-799; ARG-823; ASP-824; PHE-851; ASN-852; ARG-877; GLY-905; TRP-907; TRP-931; SER-933; VAL-935; GLY-936; CYS-961; GLU-964 AND ASN-992</scope>
</reference>
<reference key="33">
    <citation type="journal article" date="2016" name="PLoS ONE">
        <title>Characterization and Genetic Analyses of New Genes Coding for NOD2 Interacting Proteins.</title>
        <authorList>
            <person name="Thiebaut R."/>
            <person name="Esmiol S."/>
            <person name="Lecine P."/>
            <person name="Mahfouz B."/>
            <person name="Hermant A."/>
            <person name="Nicoletti C."/>
            <person name="Parnis S."/>
            <person name="Perroy J."/>
            <person name="Borg J.P."/>
            <person name="Pascoe L."/>
            <person name="Hugot J.P."/>
            <person name="Ollendorff V."/>
        </authorList>
    </citation>
    <scope>INTERACTION WITH ANKHD1; C10ORF67; CHMP5; DOCK7; ENTR1; KRT15; LDOC1; PPP1R12C; PPP2R3B; RIPK2; TRIM41 AND VIM</scope>
    <scope>INDUCTION</scope>
    <scope>CHARACTERIZATION OF VARIANTS IBD1 TRP-702 AND ARG-908</scope>
    <scope>CHARACTERIZATION OF VARIANT BLAUS GLN-334</scope>
</reference>
<reference key="34">
    <citation type="journal article" date="2017" name="ACS Infect. Dis.">
        <title>Molecular recognition of muramyl dipeptide occurs in the leucine-rich repeat domain of Nod2.</title>
        <authorList>
            <person name="Lauro M.L."/>
            <person name="D'Ambrosio E.A."/>
            <person name="Bahnson B.J."/>
            <person name="Grimes C.L."/>
        </authorList>
    </citation>
    <scope>FUNCTION</scope>
    <scope>DOMAIN</scope>
    <scope>MUTAGENESIS OF ARG-877; TRP-931 AND SER-933</scope>
</reference>
<reference key="35">
    <citation type="journal article" date="2013" name="J. Biol. Chem.">
        <title>Ubiquitin regulates caspase recruitment domain-mediated signaling by nucleotide-binding oligomerization domain-containing proteins NOD1 and NOD2.</title>
        <authorList>
            <person name="Ver Heul A.M."/>
            <person name="Fowler C.A."/>
            <person name="Ramaswamy S."/>
            <person name="Piper R.C."/>
        </authorList>
    </citation>
    <scope>UBIQUITIN-BINDING</scope>
    <scope>INTERACTION WITH RIPK2</scope>
    <scope>MUTAGENESIS OF ILE-104 AND LEU-200</scope>
</reference>
<reference key="36">
    <citation type="journal article" date="2017" name="J. Clin. Invest.">
        <title>An inflammatory bowel disease-risk variant in INAVA decreases pattern recognition receptor-induced outcomes.</title>
        <authorList>
            <person name="Yan J."/>
            <person name="Hedl M."/>
            <person name="Abraham C."/>
        </authorList>
    </citation>
    <scope>FUNCTION</scope>
    <scope>INTERACTION WITH INAVA</scope>
</reference>
<reference key="37">
    <citation type="journal article" date="2018" name="Nat. Commun.">
        <title>RIP2 filament formation is required for NOD2 dependent NF-kappaB signalling.</title>
        <authorList>
            <person name="Pellegrini E."/>
            <person name="Desfosses A."/>
            <person name="Wallmann A."/>
            <person name="Schulze W.M."/>
            <person name="Rehbein K."/>
            <person name="Mas P."/>
            <person name="Signor L."/>
            <person name="Gaudon S."/>
            <person name="Zenkeviciute G."/>
            <person name="Hons M."/>
            <person name="Malet H."/>
            <person name="Gutsche I."/>
            <person name="Sachse C."/>
            <person name="Schoehn G."/>
            <person name="Oschkinat H."/>
            <person name="Cusack S."/>
        </authorList>
    </citation>
    <scope>INTERACTION WITH RIPK2</scope>
</reference>
<reference key="38">
    <citation type="journal article" date="2018" name="Nat. Commun.">
        <title>Structural basis of RIP2 activation and signaling.</title>
        <authorList>
            <person name="Gong Q."/>
            <person name="Long Z."/>
            <person name="Zhong F.L."/>
            <person name="Teo D.E.T."/>
            <person name="Jin Y."/>
            <person name="Yin Z."/>
            <person name="Boo Z.Z."/>
            <person name="Zhang Y."/>
            <person name="Zhang J."/>
            <person name="Yang R."/>
            <person name="Bhushan S."/>
            <person name="Reversade B."/>
            <person name="Li Z."/>
            <person name="Wu B."/>
        </authorList>
    </citation>
    <scope>INTERACTION WITH RIPK2</scope>
</reference>
<reference key="39">
    <citation type="journal article" date="2018" name="Nat. Commun.">
        <title>Proteasomal degradation of NOD2 by NLRP12 in monocytes promotes bacterial tolerance and colonization by enteropathogens.</title>
        <authorList>
            <person name="Normand S."/>
            <person name="Waldschmitt N."/>
            <person name="Neerincx A."/>
            <person name="Martinez-Torres R.J."/>
            <person name="Chauvin C."/>
            <person name="Couturier-Maillard A."/>
            <person name="Boulard O."/>
            <person name="Cobret L."/>
            <person name="Awad F."/>
            <person name="Huot L."/>
            <person name="Ribeiro-Ribeiro A."/>
            <person name="Lautz K."/>
            <person name="Ruez R."/>
            <person name="Delacre M."/>
            <person name="Bondu C."/>
            <person name="Guilliams M."/>
            <person name="Scott C."/>
            <person name="Segal A."/>
            <person name="Amselem S."/>
            <person name="Hot D."/>
            <person name="Karabina S."/>
            <person name="Bohn E."/>
            <person name="Ryffel B."/>
            <person name="Poulin L.F."/>
            <person name="Kufer T.A."/>
            <person name="Chamaillard M."/>
        </authorList>
    </citation>
    <scope>INTERACTION WITH NLRP12</scope>
</reference>
<reference key="40">
    <citation type="journal article" date="2019" name="Science">
        <title>Palmitoylation of NOD1 and NOD2 is required for bacterial sensing.</title>
        <authorList>
            <person name="Lu Y."/>
            <person name="Zheng Y."/>
            <person name="Coyaud E."/>
            <person name="Zhang C."/>
            <person name="Selvabaskaran A."/>
            <person name="Yu Y."/>
            <person name="Xu Z."/>
            <person name="Weng X."/>
            <person name="Chen J.S."/>
            <person name="Meng Y."/>
            <person name="Warner N."/>
            <person name="Cheng X."/>
            <person name="Liu Y."/>
            <person name="Yao B."/>
            <person name="Hu H."/>
            <person name="Xia Z."/>
            <person name="Muise A.M."/>
            <person name="Klip A."/>
            <person name="Brumell J.H."/>
            <person name="Girardin S.E."/>
            <person name="Ying S."/>
            <person name="Fairn G.D."/>
            <person name="Raught B."/>
            <person name="Sun Q."/>
            <person name="Neculai D."/>
        </authorList>
    </citation>
    <scope>FUNCTION</scope>
    <scope>PALMITOYLATION AT CYS-395 AND CYS-1033</scope>
    <scope>MUTAGENESIS OF CYS-395 AND CYS-1033</scope>
    <scope>SUBCELLULAR LOCATION</scope>
</reference>
<reference key="41">
    <citation type="journal article" date="2021" name="EMBO J.">
        <title>Cellular stress promotes NOD1/2-dependent inflammation via the endogenous metabolite sphingosine-1-phosphate.</title>
        <authorList>
            <person name="Pei G."/>
            <person name="Zyla J."/>
            <person name="He L."/>
            <person name="Moura-Alves P."/>
            <person name="Steinle H."/>
            <person name="Saikali P."/>
            <person name="Lozza L."/>
            <person name="Nieuwenhuizen N."/>
            <person name="Weiner J."/>
            <person name="Mollenkopf H.J."/>
            <person name="Ellwanger K."/>
            <person name="Arnold C."/>
            <person name="Duan M."/>
            <person name="Dagil Y."/>
            <person name="Pashenkov M."/>
            <person name="Boneca I.G."/>
            <person name="Kufer T.A."/>
            <person name="Dorhoi A."/>
            <person name="Kaufmann S.H."/>
        </authorList>
    </citation>
    <scope>FUNCTION</scope>
    <scope>DOMAIN</scope>
</reference>
<reference key="42">
    <citation type="journal article" date="2021" name="J. Lipid Res.">
        <title>S-palmitoylation of NOD2 controls its localization to the plasma membrane.</title>
        <authorList>
            <person name="Dixon C.L."/>
            <person name="Fairn G.D."/>
        </authorList>
    </citation>
    <scope>SUBCELLULAR LOCATION</scope>
    <scope>PALMITOYLATION AT CYS-395 AND CYS-1033</scope>
    <scope>MUTAGENESIS OF CYS-395 AND CYS-1033</scope>
</reference>
<reference key="43">
    <citation type="journal article" date="2022" name="Cell Death Differ.">
        <title>Palmitoylation restricts SQSTM1/p62-mediated autophagic degradation of NOD2 to modulate inflammation.</title>
        <authorList>
            <person name="Zhou L."/>
            <person name="He X."/>
            <person name="Wang L."/>
            <person name="Wei P."/>
            <person name="Cai Z."/>
            <person name="Zhang S."/>
            <person name="Jin S."/>
            <person name="Zeng H."/>
            <person name="Cui J."/>
        </authorList>
    </citation>
    <scope>PALMITOYLATION AT CYS-395 AND CYS-1033</scope>
    <scope>PROTEIN DEGRADATION</scope>
    <scope>VARIANT CYS-444 (ISOFORM 2)</scope>
    <scope>MUTAGENESIS OF CYS-395 AND CYS-1033</scope>
    <scope>CHARACTERIZATION OF VARIANT CYS-444 (ISOFORM 2)</scope>
</reference>
<reference key="44">
    <citation type="journal article" date="2022" name="EMBO J.">
        <title>Selective autophagy of RIPosomes maintains innate immune homeostasis during bacterial infection.</title>
        <authorList>
            <person name="Mehto S."/>
            <person name="Jena K.K."/>
            <person name="Yadav R."/>
            <person name="Priyadarsini S."/>
            <person name="Samal P."/>
            <person name="Krishna S."/>
            <person name="Dhar K."/>
            <person name="Jain A."/>
            <person name="Chauhan N.R."/>
            <person name="Murmu K.C."/>
            <person name="Bal R."/>
            <person name="Sahu R."/>
            <person name="Jaiswal P."/>
            <person name="Sahoo B.S."/>
            <person name="Patnaik S."/>
            <person name="Kufer T.A."/>
            <person name="Rusten T.E."/>
            <person name="Chauhan S."/>
            <person name="Prasad P."/>
            <person name="Chauhan S."/>
        </authorList>
    </citation>
    <scope>INTERACTION WITH IRGM</scope>
    <scope>PROTEIN DEGRADATION</scope>
</reference>
<reference key="45">
    <citation type="journal article" date="2022" name="Nature">
        <title>Phosphorylation of muramyl peptides by NAGK is required for NOD2 activation.</title>
        <authorList>
            <person name="Stafford C.A."/>
            <person name="Gassauer A.M."/>
            <person name="de Oliveira Mann C.C."/>
            <person name="Tanzer M.C."/>
            <person name="Fessler E."/>
            <person name="Wefers B."/>
            <person name="Nagl D."/>
            <person name="Kuut G."/>
            <person name="Sulek K."/>
            <person name="Vasilopoulou C."/>
            <person name="Schwojer S.J."/>
            <person name="Wiest A."/>
            <person name="Pfautsch M.K."/>
            <person name="Wurst W."/>
            <person name="Yabal M."/>
            <person name="Froehlich T."/>
            <person name="Mann M."/>
            <person name="Gisch N."/>
            <person name="Jae L.T."/>
            <person name="Hornung V."/>
        </authorList>
    </citation>
    <scope>FUNCTION</scope>
</reference>
<reference key="46">
    <citation type="journal article" date="2001" name="Nature">
        <title>A frameshift mutation in NOD2 associated with susceptibility to Crohn's disease.</title>
        <authorList>
            <person name="Ogura Y."/>
            <person name="Bonen D.K."/>
            <person name="Inohara N."/>
            <person name="Nicolae D.L."/>
            <person name="Chen F.F."/>
            <person name="Ramos R."/>
            <person name="Britton H."/>
            <person name="Moran T."/>
            <person name="Karaliuskas R."/>
            <person name="Duerr R.H."/>
            <person name="Achkar J.P."/>
            <person name="Brant S.R."/>
            <person name="Bayless T.M."/>
            <person name="Kirschner B.S."/>
            <person name="Hanauer S.B."/>
            <person name="Nunez G."/>
            <person name="Cho J.H."/>
        </authorList>
    </citation>
    <scope>VARIANT IBD1 1007-LEU--LEU-1040 DELINS PRO</scope>
</reference>
<reference key="47">
    <citation type="journal article" date="2001" name="Nat. Genet.">
        <title>CARD15 mutations in Blau syndrome.</title>
        <authorList>
            <person name="Miceli-Richard C."/>
            <person name="Lesage S."/>
            <person name="Rybojad M."/>
            <person name="Prieur A.M."/>
            <person name="Manouvrier-Hanu S."/>
            <person name="Hafner R."/>
            <person name="Chamaillard M."/>
            <person name="Zouali H."/>
            <person name="Thomas G."/>
            <person name="Hugot J.-P."/>
        </authorList>
    </citation>
    <scope>VARIANTS BLAUS GLN-334; TRP-334 AND PHE-469</scope>
</reference>
<reference key="48">
    <citation type="journal article" date="2004" name="Am. J. Hum. Genet.">
        <title>Crohn disease: frequency and nature of CARD15 mutations in Ashkenazi and Sephardi/Oriental Jewish families.</title>
        <authorList>
            <person name="Tukel T."/>
            <person name="Shalata A."/>
            <person name="Present D."/>
            <person name="Rachmilewitz D."/>
            <person name="Mayer L."/>
            <person name="Grant D."/>
            <person name="Risch N."/>
            <person name="Desnick R.J."/>
        </authorList>
    </citation>
    <scope>VARIANTS IBD1 ASN-113; ALA-357; PHE-363; VAL-550 AND SER-852</scope>
</reference>
<reference key="49">
    <citation type="journal article" date="2004" name="Hum. Mol. Genet.">
        <title>Regulation of IL-8 and IL-1beta expression in Crohn's disease associated NOD2/CARD15 mutations.</title>
        <authorList>
            <person name="Li J."/>
            <person name="Moran T."/>
            <person name="Swanson E."/>
            <person name="Julian C."/>
            <person name="Harris J."/>
            <person name="Bonen D.K."/>
            <person name="Hedl M."/>
            <person name="Nicolae D.L."/>
            <person name="Abraham C."/>
            <person name="Cho J.H."/>
        </authorList>
    </citation>
    <scope>VARIANTS IBD1 TRP-702; ARG-908 AND 1007-LEU--LEU-1040 DELINS PRO</scope>
    <scope>CHARACTERIZATION OF VARIANTS IBD1 TRP-702; ARG-908 AND 1007-LEU--LEU-1040 DELINS PRO</scope>
    <scope>FUNCTION</scope>
</reference>
<reference key="50">
    <citation type="journal article" date="2005" name="Blood">
        <title>Early-onset sarcoidosis and CARD15 mutations with constitutive nuclear factor-kappaB activation: common genetic etiology with Blau syndrome.</title>
        <authorList>
            <person name="Kanazawa N."/>
            <person name="Okafuji I."/>
            <person name="Kambe N."/>
            <person name="Nishikomori R."/>
            <person name="Nakata-Hizume M."/>
            <person name="Nagai S."/>
            <person name="Fuji A."/>
            <person name="Yuasa T."/>
            <person name="Manki A."/>
            <person name="Sakurai Y."/>
            <person name="Nakajima M."/>
            <person name="Kobayashi H."/>
            <person name="Fujiwara I."/>
            <person name="Tsutsumi H."/>
            <person name="Utani A."/>
            <person name="Nishigori C."/>
            <person name="Heike T."/>
            <person name="Nakahata T."/>
            <person name="Miyachi Y."/>
        </authorList>
    </citation>
    <scope>VARIANTS BLAUS TRP-334; GLU-382; LEU-496; THR-513; PRO-605; THR-612 AND LYS-670</scope>
    <scope>CHARACTERIZATION OF VARIANTS BLAUS GLU-382; LEU-496; THR-513; PRO-605 AND LYS-670</scope>
</reference>
<reference key="51">
    <citation type="journal article" date="2005" name="Eur. J. Hum. Genet.">
        <title>A new CARD15 mutation in Blau syndrome.</title>
        <authorList>
            <person name="van Duist M.M."/>
            <person name="Albrecht M."/>
            <person name="Podswiadek M."/>
            <person name="Giachino D."/>
            <person name="Lengauer T."/>
            <person name="Punzi L."/>
            <person name="De Marchi M."/>
        </authorList>
    </citation>
    <scope>VARIANT BLAUS LYS-383</scope>
</reference>
<reference key="52">
    <citation type="journal article" date="2006" name="Immunogenetics">
        <title>Eight novel CARD15 variants detected by DNA sequence analysis of the CARD15 gene in 111 patients with inflammatory bowel disease.</title>
        <authorList>
            <person name="Schnitzler F."/>
            <person name="Brand S."/>
            <person name="Staudinger T."/>
            <person name="Pfennig S."/>
            <person name="Hofbauer K."/>
            <person name="Seiderer J."/>
            <person name="Tillack C."/>
            <person name="Goke B."/>
            <person name="Ochsenkuhn T."/>
            <person name="Lohse P."/>
        </authorList>
    </citation>
    <scope>VARIANTS IBD1 TRP-311; TRP-702; CYS-703; HIS-713; VAL-755; CYS-760; TRP-790 AND ARG-908</scope>
    <scope>VARIANTS SER-268; SER-289; CYS-391; ALA-463; TRP-791; LYS-825 AND VAL-849</scope>
</reference>
<reference key="53">
    <citation type="journal article" date="2009" name="Arthritis Rheum.">
        <title>NOD2-associated pediatric granulomatous arthritis, an expanding phenotype: study of an international registry and a national cohort in Spain.</title>
        <authorList>
            <person name="Rose C.D."/>
            <person name="Arostegui J.I."/>
            <person name="Martin T.M."/>
            <person name="Espada G."/>
            <person name="Scalzi L."/>
            <person name="Yague J."/>
            <person name="Rosenbaum J.T."/>
            <person name="Modesto C."/>
            <person name="Cristina Arnal M."/>
            <person name="Merino R."/>
            <person name="Garcia-Consuegra J."/>
            <person name="Carballo Silva M.A."/>
            <person name="Wouters C.H."/>
        </authorList>
    </citation>
    <scope>VARIANTS BLAUS GLN-334; TRP-334; LYS-383; LEU-490; TYR-495 AND CYS-587</scope>
</reference>
<reference key="54">
    <citation type="journal article" date="2009" name="Arthritis Rheum.">
        <title>Role of the NOD2 genotype in the clinical phenotype of Blau syndrome and early-onset sarcoidosis.</title>
        <authorList>
            <person name="Okafuji I."/>
            <person name="Nishikomori R."/>
            <person name="Kanazawa N."/>
            <person name="Kambe N."/>
            <person name="Fujisawa A."/>
            <person name="Yamazaki S."/>
            <person name="Saito M."/>
            <person name="Yoshioka T."/>
            <person name="Kawai T."/>
            <person name="Sakai H."/>
            <person name="Tanizaki H."/>
            <person name="Heike T."/>
            <person name="Miyachi Y."/>
            <person name="Nakahata T."/>
        </authorList>
    </citation>
    <scope>VARIANTS BLAUS GLN-334; TRP-334; GLU-382; GLY-383; TYR-495; LEU-496; THR-513; PRO-605 AND LYS-670</scope>
</reference>
<reference key="55">
    <citation type="journal article" date="2009" name="Rheumatology">
        <title>Cardiac infiltration in early-onset sarcoidosis associated with a novel heterozygous mutation, G481D, in CARD15.</title>
        <authorList>
            <person name="Okada S."/>
            <person name="Konishi N."/>
            <person name="Tsumura M."/>
            <person name="Shirao K."/>
            <person name="Yasunaga S."/>
            <person name="Sakai H."/>
            <person name="Nishikomori R."/>
            <person name="Takihara Y."/>
            <person name="Kobayashi M."/>
        </authorList>
    </citation>
    <scope>VARIANT BLAUS ASP-481</scope>
</reference>
<reference key="56">
    <citation type="journal article" date="2009" name="Scand. J. Rheumatol.">
        <title>A novel mutation in the NOD2 gene associated with Blau syndrome: a Norwegian family with four affected members.</title>
        <authorList>
            <person name="Milman N."/>
            <person name="Ursin K."/>
            <person name="Rodevand E."/>
            <person name="Nielsen F.C."/>
            <person name="Hansen T.V."/>
        </authorList>
    </citation>
    <scope>VARIANT BLAUS ASN-605</scope>
</reference>
<reference key="57">
    <citation type="journal article" date="2010" name="Pediatr. Dermatol.">
        <title>Sporadic Blau syndrome with onset of widespread granulomatous dermatitis in the newborn period.</title>
        <authorList>
            <person name="Stoevesandt J."/>
            <person name="Morbach H."/>
            <person name="Martin T.M."/>
            <person name="Zierhut M."/>
            <person name="Girschick H."/>
            <person name="Hamm H."/>
        </authorList>
    </citation>
    <scope>VARIANT BLAUS TRP-334</scope>
</reference>
<reference key="58">
    <citation type="journal article" date="2011" name="Arthritis Res. Ther.">
        <title>A new category of autoinflammatory disease associated with NOD2 gene mutations.</title>
        <authorList>
            <person name="Yao Q."/>
            <person name="Zhou L."/>
            <person name="Cusumano P."/>
            <person name="Bose N."/>
            <person name="Piliang M."/>
            <person name="Jayakar B."/>
            <person name="Su L.C."/>
            <person name="Shen B."/>
        </authorList>
    </citation>
    <scope>INVOLVEMENT IN YAOS</scope>
    <scope>VARIANT YAOS TRP-702</scope>
</reference>
<reference key="59">
    <citation type="journal article" date="2015" name="Case Rep. Rheumatol.">
        <title>A new mutation in blau syndrome.</title>
        <authorList>
            <person name="Zeybek C."/>
            <person name="Basbozkurt G."/>
            <person name="Gul D."/>
            <person name="Demirkaya E."/>
            <person name="Gok F."/>
        </authorList>
    </citation>
    <scope>VARIANT BLAUS SER-507</scope>
</reference>
<reference key="60">
    <citation type="journal article" date="2015" name="J. Allergy Clin. Immunol.">
        <title>Somatic NOD2 mosaicism in Blau syndrome.</title>
        <authorList>
            <person name="de Inocencio J."/>
            <person name="Mensa-Vilaro A."/>
            <person name="Tejada-Palacios P."/>
            <person name="Enriquez-Merayo E."/>
            <person name="Gonzalez-Roca E."/>
            <person name="Magri G."/>
            <person name="Ruiz-Ortiz E."/>
            <person name="Cerutti A."/>
            <person name="Yaguee J."/>
            <person name="Arostegui J.I."/>
        </authorList>
    </citation>
    <scope>VARIANT BLAUS GLN-334</scope>
    <scope>VARIANT SER-268</scope>
</reference>
<reference key="61">
    <citation type="journal article" date="2015" name="Rheumatology">
        <title>NOD2-associated autoinflammatory disease: a large cohort study.</title>
        <authorList>
            <person name="Yao Q."/>
            <person name="Shen M."/>
            <person name="McDonald C."/>
            <person name="Lacbawan F."/>
            <person name="Moran R."/>
            <person name="Shen B."/>
        </authorList>
    </citation>
    <scope>INVOLVEMENT IN YAOS</scope>
    <scope>VARIANT YAOS ARG-908</scope>
</reference>
<reference key="62">
    <citation type="journal article" date="2021" name="Ophthalmic Genet.">
        <title>A novel pathogenic NOD2 variant in a mother and daughter with Blau syndrome.</title>
        <authorList>
            <person name="Rodrigues F.G."/>
            <person name="Petrushkin H."/>
            <person name="Webster A.R."/>
            <person name="Bickerstaff M."/>
            <person name="Moraitis E."/>
            <person name="Rowczenio D."/>
            <person name="Arostegui J.I."/>
            <person name="Westcott M."/>
        </authorList>
    </citation>
    <scope>VARIANT BLAUS ASP-498</scope>
</reference>
<sequence>MGEEGGSASHDEEERASVLLGHSPGCEMCSQEAFQAQRSQLVELLVSGSLEGFESVLDWLLSWEVLSWEDYEGFHLLGQPLSHLARRLLDTVWNKGTWACQKLIAAAQEAQADSQSPKLHGCWDPHSLHPARDLQSHRPAIVRRLHSHVENMLDLAWERGFVSQYECDEIRLPIFTPSQRARRLLDLATVKANGLAAFLLQHVQELPVPLALPLEAATCKKYMAKLRTTVSAQSRFLSTYDGAETLCLEDIYTENVLEVWADVGMAGPPQKSPATLGLEELFSTPGHLNDDADTVLVVGEAGSGKSTLLQRLHLLWAAGQDFQEFLFVFPFSCRQLQCMAKPLSVRTLLFEHCCWPDVGQEDIFQLLLDHPDRVLLTFDGFDEFKFRFTDRERHCSPTDPTSVQTLLFNLLQGNLLKNARKVVTSRPAAVSAFLRKYIRTEFNLKGFSEQGIELYLRKRHHEPGVADRLIRLLQETSALHGLCHLPVFSWMVSKCHQELLLQEGGSPKTTTDMYLLILQHFLLHATPPDSASQGLGPSLLRGRLPTLLHLGRLALWGLGMCCYVFSAQQLQAAQVSPDDISLGFLVRAKGVVPGSTAPLEFLHITFQCFFAAFYLALSADVPPALLRHLFNCGRPGNSPMARLLPTMCIQASEGKDSSVAALLQKAEPHNLQITAAFLAGLLSREHWGLLAECQTSEKALLRRQACARWCLARSLRKHFHSIPPAAPGEAKSVHAMPGFIWLIRSLYEMQEERLARKAARGLNVGHLKLTFCSVGPTECAALAFVLQHLRRPVALQLDYNSVGDIGVEQLLPCLGVCKALYLRDNNISDRGICKLIECALHCEQLQKLALFNNKLTDGCAHSMAKLLACRQNFLALRLGNNYITAAGAQVLAEGLRGNTSLQFLGFWGNRVGDEGAQALAEALGDHQSLRWLSLVGNNIGSVGAQALALMLAKNVMLEELCLEENHLQDEGVCSLAEGLKKNSSLKILKLSNNCITYLGAEALLQALERNDTILEVWLRGNTFSLEEVDKLGCRDTRLLL</sequence>
<protein>
    <recommendedName>
        <fullName evidence="67">Nucleotide-binding oligomerization domain-containing protein 2</fullName>
    </recommendedName>
    <alternativeName>
        <fullName evidence="68">Caspase recruitment domain-containing protein 15</fullName>
    </alternativeName>
    <alternativeName>
        <fullName>Inflammatory bowel disease protein 1</fullName>
    </alternativeName>
</protein>
<organism>
    <name type="scientific">Homo sapiens</name>
    <name type="common">Human</name>
    <dbReference type="NCBI Taxonomy" id="9606"/>
    <lineage>
        <taxon>Eukaryota</taxon>
        <taxon>Metazoa</taxon>
        <taxon>Chordata</taxon>
        <taxon>Craniata</taxon>
        <taxon>Vertebrata</taxon>
        <taxon>Euteleostomi</taxon>
        <taxon>Mammalia</taxon>
        <taxon>Eutheria</taxon>
        <taxon>Euarchontoglires</taxon>
        <taxon>Primates</taxon>
        <taxon>Haplorrhini</taxon>
        <taxon>Catarrhini</taxon>
        <taxon>Hominidae</taxon>
        <taxon>Homo</taxon>
    </lineage>
</organism>
<keyword id="KW-1064">Adaptive immunity</keyword>
<keyword id="KW-0024">Alternative initiation</keyword>
<keyword id="KW-0067">ATP-binding</keyword>
<keyword id="KW-0072">Autophagy</keyword>
<keyword id="KW-1003">Cell membrane</keyword>
<keyword id="KW-0963">Cytoplasm</keyword>
<keyword id="KW-0225">Disease variant</keyword>
<keyword id="KW-0325">Glycoprotein</keyword>
<keyword id="KW-0391">Immunity</keyword>
<keyword id="KW-0399">Innate immunity</keyword>
<keyword id="KW-0433">Leucine-rich repeat</keyword>
<keyword id="KW-0449">Lipoprotein</keyword>
<keyword id="KW-0472">Membrane</keyword>
<keyword id="KW-0496">Mitochondrion</keyword>
<keyword id="KW-0547">Nucleotide-binding</keyword>
<keyword id="KW-0564">Palmitate</keyword>
<keyword id="KW-1267">Proteomics identification</keyword>
<keyword id="KW-1185">Reference proteome</keyword>
<keyword id="KW-0677">Repeat</keyword>
<keyword id="KW-0832">Ubl conjugation</keyword>
<dbReference type="EMBL" id="AF178930">
    <property type="protein sequence ID" value="AAG33677.1"/>
    <property type="molecule type" value="mRNA"/>
</dbReference>
<dbReference type="EMBL" id="AF385089">
    <property type="protein sequence ID" value="AAK70867.1"/>
    <property type="molecule type" value="Genomic_DNA"/>
</dbReference>
<dbReference type="EMBL" id="AF385090">
    <property type="protein sequence ID" value="AAK70868.1"/>
    <property type="molecule type" value="Genomic_DNA"/>
</dbReference>
<dbReference type="EMBL" id="AJ303140">
    <property type="protein sequence ID" value="CAC42117.1"/>
    <property type="molecule type" value="Genomic_DNA"/>
</dbReference>
<dbReference type="EMBL" id="HQ204571">
    <property type="protein sequence ID" value="ADN95581.1"/>
    <property type="molecule type" value="mRNA"/>
</dbReference>
<dbReference type="CCDS" id="CCDS10746.1">
    <molecule id="Q9HC29-1"/>
</dbReference>
<dbReference type="CCDS" id="CCDS86525.1">
    <molecule id="Q9HC29-2"/>
</dbReference>
<dbReference type="RefSeq" id="NP_001280486.1">
    <molecule id="Q9HC29-2"/>
    <property type="nucleotide sequence ID" value="NM_001293557.2"/>
</dbReference>
<dbReference type="RefSeq" id="NP_001357395.1">
    <molecule id="Q9HC29-2"/>
    <property type="nucleotide sequence ID" value="NM_001370466.1"/>
</dbReference>
<dbReference type="RefSeq" id="NP_071445.1">
    <molecule id="Q9HC29-1"/>
    <property type="nucleotide sequence ID" value="NM_022162.3"/>
</dbReference>
<dbReference type="RefSeq" id="XP_005256141.1">
    <property type="nucleotide sequence ID" value="XM_005256084.3"/>
</dbReference>
<dbReference type="SMR" id="Q9HC29"/>
<dbReference type="BioGRID" id="122077">
    <property type="interactions" value="104"/>
</dbReference>
<dbReference type="CORUM" id="Q9HC29"/>
<dbReference type="DIP" id="DIP-41998N"/>
<dbReference type="FunCoup" id="Q9HC29">
    <property type="interactions" value="436"/>
</dbReference>
<dbReference type="IntAct" id="Q9HC29">
    <property type="interactions" value="76"/>
</dbReference>
<dbReference type="MINT" id="Q9HC29"/>
<dbReference type="STRING" id="9606.ENSP00000300589"/>
<dbReference type="BindingDB" id="Q9HC29"/>
<dbReference type="ChEMBL" id="CHEMBL1293266"/>
<dbReference type="DrugBank" id="DB15063">
    <property type="generic name" value="Inarigivir soproxil"/>
</dbReference>
<dbReference type="DrugBank" id="DB13615">
    <property type="generic name" value="Mifamurtide"/>
</dbReference>
<dbReference type="DrugCentral" id="Q9HC29"/>
<dbReference type="GuidetoPHARMACOLOGY" id="1763"/>
<dbReference type="GlyGen" id="Q9HC29">
    <property type="glycosylation" value="2 sites, 1 O-linked glycan (1 site)"/>
</dbReference>
<dbReference type="iPTMnet" id="Q9HC29"/>
<dbReference type="PhosphoSitePlus" id="Q9HC29"/>
<dbReference type="SwissPalm" id="Q9HC29"/>
<dbReference type="BioMuta" id="NOD2"/>
<dbReference type="DMDM" id="20137973"/>
<dbReference type="jPOST" id="Q9HC29"/>
<dbReference type="MassIVE" id="Q9HC29"/>
<dbReference type="PaxDb" id="9606-ENSP00000300589"/>
<dbReference type="PeptideAtlas" id="Q9HC29"/>
<dbReference type="Antibodypedia" id="28302">
    <property type="antibodies" value="495 antibodies from 37 providers"/>
</dbReference>
<dbReference type="DNASU" id="64127"/>
<dbReference type="Ensembl" id="ENST00000300589.6">
    <molecule id="Q9HC29-1"/>
    <property type="protein sequence ID" value="ENSP00000300589.2"/>
    <property type="gene ID" value="ENSG00000167207.15"/>
</dbReference>
<dbReference type="Ensembl" id="ENST00000647318.2">
    <molecule id="Q9HC29-2"/>
    <property type="protein sequence ID" value="ENSP00000495993.1"/>
    <property type="gene ID" value="ENSG00000167207.15"/>
</dbReference>
<dbReference type="GeneID" id="64127"/>
<dbReference type="KEGG" id="hsa:64127"/>
<dbReference type="MANE-Select" id="ENST00000647318.2">
    <molecule id="Q9HC29-2"/>
    <property type="protein sequence ID" value="ENSP00000495993.1"/>
    <property type="RefSeq nucleotide sequence ID" value="NM_001370466.1"/>
    <property type="RefSeq protein sequence ID" value="NP_001357395.1"/>
</dbReference>
<dbReference type="UCSC" id="uc002egm.2">
    <molecule id="Q9HC29-1"/>
    <property type="organism name" value="human"/>
</dbReference>
<dbReference type="AGR" id="HGNC:5331"/>
<dbReference type="CTD" id="64127"/>
<dbReference type="DisGeNET" id="64127"/>
<dbReference type="GeneCards" id="NOD2"/>
<dbReference type="HGNC" id="HGNC:5331">
    <property type="gene designation" value="NOD2"/>
</dbReference>
<dbReference type="HPA" id="ENSG00000167207">
    <property type="expression patterns" value="Tissue enhanced (bone marrow, esophagus, skin, vagina)"/>
</dbReference>
<dbReference type="MalaCards" id="NOD2"/>
<dbReference type="MIM" id="186580">
    <property type="type" value="phenotype"/>
</dbReference>
<dbReference type="MIM" id="266600">
    <property type="type" value="phenotype"/>
</dbReference>
<dbReference type="MIM" id="605956">
    <property type="type" value="gene"/>
</dbReference>
<dbReference type="MIM" id="617321">
    <property type="type" value="phenotype"/>
</dbReference>
<dbReference type="neXtProt" id="NX_Q9HC29"/>
<dbReference type="OpenTargets" id="ENSG00000167207"/>
<dbReference type="Orphanet" id="90340">
    <property type="disease" value="Blau syndrome"/>
</dbReference>
<dbReference type="PharmGKB" id="PA26074"/>
<dbReference type="VEuPathDB" id="HostDB:ENSG00000167207"/>
<dbReference type="eggNOG" id="KOG4308">
    <property type="taxonomic scope" value="Eukaryota"/>
</dbReference>
<dbReference type="GeneTree" id="ENSGT00940000160934"/>
<dbReference type="HOGENOM" id="CLU_011291_0_0_1"/>
<dbReference type="InParanoid" id="Q9HC29"/>
<dbReference type="OMA" id="HCCWPDA"/>
<dbReference type="OrthoDB" id="120976at2759"/>
<dbReference type="PAN-GO" id="Q9HC29">
    <property type="GO annotations" value="5 GO annotations based on evolutionary models"/>
</dbReference>
<dbReference type="PhylomeDB" id="Q9HC29"/>
<dbReference type="TreeFam" id="TF352118"/>
<dbReference type="PathwayCommons" id="Q9HC29"/>
<dbReference type="Reactome" id="R-HSA-168638">
    <property type="pathway name" value="NOD1/2 Signaling Pathway"/>
</dbReference>
<dbReference type="Reactome" id="R-HSA-445989">
    <property type="pathway name" value="TAK1-dependent IKK and NF-kappa-B activation"/>
</dbReference>
<dbReference type="Reactome" id="R-HSA-450302">
    <property type="pathway name" value="activated TAK1 mediates p38 MAPK activation"/>
</dbReference>
<dbReference type="Reactome" id="R-HSA-450321">
    <property type="pathway name" value="JNK (c-Jun kinases) phosphorylation and activation mediated by activated human TAK1"/>
</dbReference>
<dbReference type="Reactome" id="R-HSA-5689896">
    <property type="pathway name" value="Ovarian tumor domain proteases"/>
</dbReference>
<dbReference type="Reactome" id="R-HSA-9020702">
    <property type="pathway name" value="Interleukin-1 signaling"/>
</dbReference>
<dbReference type="Reactome" id="R-HSA-9705671">
    <property type="pathway name" value="SARS-CoV-2 activates/modulates innate and adaptive immune responses"/>
</dbReference>
<dbReference type="SignaLink" id="Q9HC29"/>
<dbReference type="SIGNOR" id="Q9HC29"/>
<dbReference type="BioGRID-ORCS" id="64127">
    <property type="hits" value="17 hits in 1160 CRISPR screens"/>
</dbReference>
<dbReference type="ChiTaRS" id="NOD2">
    <property type="organism name" value="human"/>
</dbReference>
<dbReference type="GeneWiki" id="NOD2"/>
<dbReference type="GenomeRNAi" id="64127"/>
<dbReference type="Pharos" id="Q9HC29">
    <property type="development level" value="Tclin"/>
</dbReference>
<dbReference type="PRO" id="PR:Q9HC29"/>
<dbReference type="Proteomes" id="UP000005640">
    <property type="component" value="Chromosome 16"/>
</dbReference>
<dbReference type="RNAct" id="Q9HC29">
    <property type="molecule type" value="protein"/>
</dbReference>
<dbReference type="Bgee" id="ENSG00000167207">
    <property type="expression patterns" value="Expressed in monocyte and 115 other cell types or tissues"/>
</dbReference>
<dbReference type="ExpressionAtlas" id="Q9HC29">
    <property type="expression patterns" value="baseline and differential"/>
</dbReference>
<dbReference type="GO" id="GO:0016323">
    <property type="term" value="C:basolateral plasma membrane"/>
    <property type="evidence" value="ECO:0000314"/>
    <property type="project" value="UniProtKB"/>
</dbReference>
<dbReference type="GO" id="GO:0009986">
    <property type="term" value="C:cell surface"/>
    <property type="evidence" value="ECO:0000314"/>
    <property type="project" value="UniProtKB"/>
</dbReference>
<dbReference type="GO" id="GO:0005737">
    <property type="term" value="C:cytoplasm"/>
    <property type="evidence" value="ECO:0000314"/>
    <property type="project" value="UniProtKB"/>
</dbReference>
<dbReference type="GO" id="GO:0005856">
    <property type="term" value="C:cytoskeleton"/>
    <property type="evidence" value="ECO:0000314"/>
    <property type="project" value="UniProtKB"/>
</dbReference>
<dbReference type="GO" id="GO:0005829">
    <property type="term" value="C:cytosol"/>
    <property type="evidence" value="ECO:0000314"/>
    <property type="project" value="HPA"/>
</dbReference>
<dbReference type="GO" id="GO:0019897">
    <property type="term" value="C:extrinsic component of plasma membrane"/>
    <property type="evidence" value="ECO:0000314"/>
    <property type="project" value="UniProtKB"/>
</dbReference>
<dbReference type="GO" id="GO:0005794">
    <property type="term" value="C:Golgi apparatus"/>
    <property type="evidence" value="ECO:0000314"/>
    <property type="project" value="HPA"/>
</dbReference>
<dbReference type="GO" id="GO:0005739">
    <property type="term" value="C:mitochondrion"/>
    <property type="evidence" value="ECO:0007669"/>
    <property type="project" value="UniProtKB-SubCell"/>
</dbReference>
<dbReference type="GO" id="GO:0045335">
    <property type="term" value="C:phagocytic vesicle"/>
    <property type="evidence" value="ECO:0000314"/>
    <property type="project" value="UniProtKB"/>
</dbReference>
<dbReference type="GO" id="GO:0005886">
    <property type="term" value="C:plasma membrane"/>
    <property type="evidence" value="ECO:0000314"/>
    <property type="project" value="UniProtKB"/>
</dbReference>
<dbReference type="GO" id="GO:0032991">
    <property type="term" value="C:protein-containing complex"/>
    <property type="evidence" value="ECO:0000314"/>
    <property type="project" value="UniProtKB"/>
</dbReference>
<dbReference type="GO" id="GO:0031982">
    <property type="term" value="C:vesicle"/>
    <property type="evidence" value="ECO:0000314"/>
    <property type="project" value="UniProtKB"/>
</dbReference>
<dbReference type="GO" id="GO:0003779">
    <property type="term" value="F:actin binding"/>
    <property type="evidence" value="ECO:0000314"/>
    <property type="project" value="UniProtKB"/>
</dbReference>
<dbReference type="GO" id="GO:0043531">
    <property type="term" value="F:ADP binding"/>
    <property type="evidence" value="ECO:0000250"/>
    <property type="project" value="UniProtKB"/>
</dbReference>
<dbReference type="GO" id="GO:0005524">
    <property type="term" value="F:ATP binding"/>
    <property type="evidence" value="ECO:0007669"/>
    <property type="project" value="UniProtKB-KW"/>
</dbReference>
<dbReference type="GO" id="GO:0050700">
    <property type="term" value="F:CARD domain binding"/>
    <property type="evidence" value="ECO:0000353"/>
    <property type="project" value="UniProtKB"/>
</dbReference>
<dbReference type="GO" id="GO:0019899">
    <property type="term" value="F:enzyme binding"/>
    <property type="evidence" value="ECO:0000353"/>
    <property type="project" value="UniProtKB"/>
</dbReference>
<dbReference type="GO" id="GO:0030544">
    <property type="term" value="F:Hsp70 protein binding"/>
    <property type="evidence" value="ECO:0000353"/>
    <property type="project" value="UniProtKB"/>
</dbReference>
<dbReference type="GO" id="GO:0051879">
    <property type="term" value="F:Hsp90 protein binding"/>
    <property type="evidence" value="ECO:0000314"/>
    <property type="project" value="UniProtKB"/>
</dbReference>
<dbReference type="GO" id="GO:0032500">
    <property type="term" value="F:muramyl dipeptide binding"/>
    <property type="evidence" value="ECO:0000314"/>
    <property type="project" value="UniProtKB"/>
</dbReference>
<dbReference type="GO" id="GO:0038187">
    <property type="term" value="F:pattern recognition receptor activity"/>
    <property type="evidence" value="ECO:0000314"/>
    <property type="project" value="UniProtKB"/>
</dbReference>
<dbReference type="GO" id="GO:0042834">
    <property type="term" value="F:peptidoglycan binding"/>
    <property type="evidence" value="ECO:0000314"/>
    <property type="project" value="HGNC-UCL"/>
</dbReference>
<dbReference type="GO" id="GO:0019901">
    <property type="term" value="F:protein kinase binding"/>
    <property type="evidence" value="ECO:0000353"/>
    <property type="project" value="UniProtKB"/>
</dbReference>
<dbReference type="GO" id="GO:0044877">
    <property type="term" value="F:protein-containing complex binding"/>
    <property type="evidence" value="ECO:0000353"/>
    <property type="project" value="UniProtKB"/>
</dbReference>
<dbReference type="GO" id="GO:0043130">
    <property type="term" value="F:ubiquitin binding"/>
    <property type="evidence" value="ECO:0000314"/>
    <property type="project" value="UniProtKB"/>
</dbReference>
<dbReference type="GO" id="GO:0002250">
    <property type="term" value="P:adaptive immune response"/>
    <property type="evidence" value="ECO:0007669"/>
    <property type="project" value="UniProtKB-KW"/>
</dbReference>
<dbReference type="GO" id="GO:0140367">
    <property type="term" value="P:antibacterial innate immune response"/>
    <property type="evidence" value="ECO:0000314"/>
    <property type="project" value="UniProt"/>
</dbReference>
<dbReference type="GO" id="GO:0006914">
    <property type="term" value="P:autophagy"/>
    <property type="evidence" value="ECO:0007669"/>
    <property type="project" value="UniProtKB-KW"/>
</dbReference>
<dbReference type="GO" id="GO:0007249">
    <property type="term" value="P:canonical NF-kappaB signal transduction"/>
    <property type="evidence" value="ECO:0000314"/>
    <property type="project" value="BHF-UCL"/>
</dbReference>
<dbReference type="GO" id="GO:0071222">
    <property type="term" value="P:cellular response to lipopolysaccharide"/>
    <property type="evidence" value="ECO:0000315"/>
    <property type="project" value="UniProtKB"/>
</dbReference>
<dbReference type="GO" id="GO:0071225">
    <property type="term" value="P:cellular response to muramyl dipeptide"/>
    <property type="evidence" value="ECO:0000314"/>
    <property type="project" value="UniProtKB"/>
</dbReference>
<dbReference type="GO" id="GO:0071224">
    <property type="term" value="P:cellular response to peptidoglycan"/>
    <property type="evidence" value="ECO:0007669"/>
    <property type="project" value="Ensembl"/>
</dbReference>
<dbReference type="GO" id="GO:0006952">
    <property type="term" value="P:defense response"/>
    <property type="evidence" value="ECO:0000304"/>
    <property type="project" value="HGNC-UCL"/>
</dbReference>
<dbReference type="GO" id="GO:0042742">
    <property type="term" value="P:defense response to bacterium"/>
    <property type="evidence" value="ECO:0000314"/>
    <property type="project" value="UniProtKB"/>
</dbReference>
<dbReference type="GO" id="GO:0016045">
    <property type="term" value="P:detection of bacterium"/>
    <property type="evidence" value="ECO:0000314"/>
    <property type="project" value="HGNC-UCL"/>
</dbReference>
<dbReference type="GO" id="GO:0009595">
    <property type="term" value="P:detection of biotic stimulus"/>
    <property type="evidence" value="ECO:0000304"/>
    <property type="project" value="HGNC-UCL"/>
</dbReference>
<dbReference type="GO" id="GO:0032498">
    <property type="term" value="P:detection of muramyl dipeptide"/>
    <property type="evidence" value="ECO:0000314"/>
    <property type="project" value="MGI"/>
</dbReference>
<dbReference type="GO" id="GO:0048874">
    <property type="term" value="P:host-mediated regulation of intestinal microbiota composition"/>
    <property type="evidence" value="ECO:0000250"/>
    <property type="project" value="UniProtKB"/>
</dbReference>
<dbReference type="GO" id="GO:0045087">
    <property type="term" value="P:innate immune response"/>
    <property type="evidence" value="ECO:0000314"/>
    <property type="project" value="UniProtKB"/>
</dbReference>
<dbReference type="GO" id="GO:0036335">
    <property type="term" value="P:intestinal stem cell homeostasis"/>
    <property type="evidence" value="ECO:0000250"/>
    <property type="project" value="UniProtKB"/>
</dbReference>
<dbReference type="GO" id="GO:0035556">
    <property type="term" value="P:intracellular signal transduction"/>
    <property type="evidence" value="ECO:0000314"/>
    <property type="project" value="HGNC-UCL"/>
</dbReference>
<dbReference type="GO" id="GO:0030277">
    <property type="term" value="P:maintenance of gastrointestinal epithelium"/>
    <property type="evidence" value="ECO:0000315"/>
    <property type="project" value="UniProtKB"/>
</dbReference>
<dbReference type="GO" id="GO:2000110">
    <property type="term" value="P:negative regulation of macrophage apoptotic process"/>
    <property type="evidence" value="ECO:0000250"/>
    <property type="project" value="BHF-UCL"/>
</dbReference>
<dbReference type="GO" id="GO:0070431">
    <property type="term" value="P:nucleotide-binding oligomerization domain containing 2 signaling pathway"/>
    <property type="evidence" value="ECO:0000314"/>
    <property type="project" value="UniProtKB"/>
</dbReference>
<dbReference type="GO" id="GO:0002221">
    <property type="term" value="P:pattern recognition receptor signaling pathway"/>
    <property type="evidence" value="ECO:0000314"/>
    <property type="project" value="UniProtKB"/>
</dbReference>
<dbReference type="GO" id="GO:0050871">
    <property type="term" value="P:positive regulation of B cell activation"/>
    <property type="evidence" value="ECO:0000314"/>
    <property type="project" value="BHF-UCL"/>
</dbReference>
<dbReference type="GO" id="GO:0043123">
    <property type="term" value="P:positive regulation of canonical NF-kappaB signal transduction"/>
    <property type="evidence" value="ECO:0000314"/>
    <property type="project" value="UniProtKB"/>
</dbReference>
<dbReference type="GO" id="GO:0002720">
    <property type="term" value="P:positive regulation of cytokine production involved in immune response"/>
    <property type="evidence" value="ECO:0000315"/>
    <property type="project" value="UniProtKB"/>
</dbReference>
<dbReference type="GO" id="GO:1900017">
    <property type="term" value="P:positive regulation of cytokine production involved in inflammatory response"/>
    <property type="evidence" value="ECO:0000314"/>
    <property type="project" value="CACAO"/>
</dbReference>
<dbReference type="GO" id="GO:0002606">
    <property type="term" value="P:positive regulation of dendritic cell antigen processing and presentation"/>
    <property type="evidence" value="ECO:0000250"/>
    <property type="project" value="BHF-UCL"/>
</dbReference>
<dbReference type="GO" id="GO:0002732">
    <property type="term" value="P:positive regulation of dendritic cell cytokine production"/>
    <property type="evidence" value="ECO:0007669"/>
    <property type="project" value="Ensembl"/>
</dbReference>
<dbReference type="GO" id="GO:0050679">
    <property type="term" value="P:positive regulation of epithelial cell proliferation"/>
    <property type="evidence" value="ECO:0000250"/>
    <property type="project" value="BHF-UCL"/>
</dbReference>
<dbReference type="GO" id="GO:0070374">
    <property type="term" value="P:positive regulation of ERK1 and ERK2 cascade"/>
    <property type="evidence" value="ECO:0000250"/>
    <property type="project" value="BHF-UCL"/>
</dbReference>
<dbReference type="GO" id="GO:0046645">
    <property type="term" value="P:positive regulation of gamma-delta T cell activation"/>
    <property type="evidence" value="ECO:0000250"/>
    <property type="project" value="BHF-UCL"/>
</dbReference>
<dbReference type="GO" id="GO:0032731">
    <property type="term" value="P:positive regulation of interleukin-1 beta production"/>
    <property type="evidence" value="ECO:0000314"/>
    <property type="project" value="HGNC-UCL"/>
</dbReference>
<dbReference type="GO" id="GO:0032733">
    <property type="term" value="P:positive regulation of interleukin-10 production"/>
    <property type="evidence" value="ECO:0000250"/>
    <property type="project" value="BHF-UCL"/>
</dbReference>
<dbReference type="GO" id="GO:0032740">
    <property type="term" value="P:positive regulation of interleukin-17 production"/>
    <property type="evidence" value="ECO:0000315"/>
    <property type="project" value="UniProtKB"/>
</dbReference>
<dbReference type="GO" id="GO:0032755">
    <property type="term" value="P:positive regulation of interleukin-6 production"/>
    <property type="evidence" value="ECO:0000314"/>
    <property type="project" value="BHF-UCL"/>
</dbReference>
<dbReference type="GO" id="GO:0032757">
    <property type="term" value="P:positive regulation of interleukin-8 production"/>
    <property type="evidence" value="ECO:0000315"/>
    <property type="project" value="UniProtKB"/>
</dbReference>
<dbReference type="GO" id="GO:0046330">
    <property type="term" value="P:positive regulation of JNK cascade"/>
    <property type="evidence" value="ECO:0000314"/>
    <property type="project" value="MGI"/>
</dbReference>
<dbReference type="GO" id="GO:0043410">
    <property type="term" value="P:positive regulation of MAPK cascade"/>
    <property type="evidence" value="ECO:0000250"/>
    <property type="project" value="BHF-UCL"/>
</dbReference>
<dbReference type="GO" id="GO:1901526">
    <property type="term" value="P:positive regulation of mitophagy"/>
    <property type="evidence" value="ECO:0000250"/>
    <property type="project" value="UniProtKB"/>
</dbReference>
<dbReference type="GO" id="GO:0051092">
    <property type="term" value="P:positive regulation of NF-kappaB transcription factor activity"/>
    <property type="evidence" value="ECO:0000314"/>
    <property type="project" value="UniProtKB"/>
</dbReference>
<dbReference type="GO" id="GO:1901224">
    <property type="term" value="P:positive regulation of non-canonical NF-kappaB signal transduction"/>
    <property type="evidence" value="ECO:0000315"/>
    <property type="project" value="UniProtKB"/>
</dbReference>
<dbReference type="GO" id="GO:0045747">
    <property type="term" value="P:positive regulation of Notch signaling pathway"/>
    <property type="evidence" value="ECO:0000250"/>
    <property type="project" value="BHF-UCL"/>
</dbReference>
<dbReference type="GO" id="GO:1902523">
    <property type="term" value="P:positive regulation of protein K63-linked ubiquitination"/>
    <property type="evidence" value="ECO:0000315"/>
    <property type="project" value="UniProtKB"/>
</dbReference>
<dbReference type="GO" id="GO:0032874">
    <property type="term" value="P:positive regulation of stress-activated MAPK cascade"/>
    <property type="evidence" value="ECO:0000314"/>
    <property type="project" value="MGI"/>
</dbReference>
<dbReference type="GO" id="GO:0045944">
    <property type="term" value="P:positive regulation of transcription by RNA polymerase II"/>
    <property type="evidence" value="ECO:0000314"/>
    <property type="project" value="UniProtKB"/>
</dbReference>
<dbReference type="GO" id="GO:0032760">
    <property type="term" value="P:positive regulation of tumor necrosis factor production"/>
    <property type="evidence" value="ECO:0000314"/>
    <property type="project" value="MGI"/>
</dbReference>
<dbReference type="GO" id="GO:0002830">
    <property type="term" value="P:positive regulation of type 2 immune response"/>
    <property type="evidence" value="ECO:0000315"/>
    <property type="project" value="BHF-UCL"/>
</dbReference>
<dbReference type="GO" id="GO:0032098">
    <property type="term" value="P:regulation of appetite"/>
    <property type="evidence" value="ECO:0000250"/>
    <property type="project" value="UniProtKB"/>
</dbReference>
<dbReference type="GO" id="GO:0050727">
    <property type="term" value="P:regulation of inflammatory response"/>
    <property type="evidence" value="ECO:0000314"/>
    <property type="project" value="BHF-UCL"/>
</dbReference>
<dbReference type="GO" id="GO:0032495">
    <property type="term" value="P:response to muramyl dipeptide"/>
    <property type="evidence" value="ECO:0000314"/>
    <property type="project" value="UniProtKB"/>
</dbReference>
<dbReference type="GO" id="GO:0007584">
    <property type="term" value="P:response to nutrient"/>
    <property type="evidence" value="ECO:0007669"/>
    <property type="project" value="Ensembl"/>
</dbReference>
<dbReference type="GO" id="GO:0001659">
    <property type="term" value="P:temperature homeostasis"/>
    <property type="evidence" value="ECO:0000250"/>
    <property type="project" value="UniProtKB"/>
</dbReference>
<dbReference type="CDD" id="cd08788">
    <property type="entry name" value="CARD_NOD2_2_CARD15"/>
    <property type="match status" value="1"/>
</dbReference>
<dbReference type="FunFam" id="3.80.10.10:FF:000239">
    <property type="entry name" value="Nucleotide-binding oligomerization domain-containing 2"/>
    <property type="match status" value="1"/>
</dbReference>
<dbReference type="FunFam" id="1.10.533.10:FF:000032">
    <property type="entry name" value="Nucleotide-binding oligomerization domain-containing protein 2"/>
    <property type="match status" value="1"/>
</dbReference>
<dbReference type="FunFam" id="1.10.533.10:FF:000045">
    <property type="entry name" value="Nucleotide-binding oligomerization domain-containing protein 2"/>
    <property type="match status" value="1"/>
</dbReference>
<dbReference type="FunFam" id="3.40.50.300:FF:000940">
    <property type="entry name" value="Nucleotide-binding oligomerization domain-containing protein 2"/>
    <property type="match status" value="1"/>
</dbReference>
<dbReference type="Gene3D" id="1.10.533.10">
    <property type="entry name" value="Death Domain, Fas"/>
    <property type="match status" value="2"/>
</dbReference>
<dbReference type="Gene3D" id="3.40.50.300">
    <property type="entry name" value="P-loop containing nucleotide triphosphate hydrolases"/>
    <property type="match status" value="1"/>
</dbReference>
<dbReference type="Gene3D" id="3.80.10.10">
    <property type="entry name" value="Ribonuclease Inhibitor"/>
    <property type="match status" value="1"/>
</dbReference>
<dbReference type="InterPro" id="IPR001315">
    <property type="entry name" value="CARD"/>
</dbReference>
<dbReference type="InterPro" id="IPR011029">
    <property type="entry name" value="DEATH-like_dom_sf"/>
</dbReference>
<dbReference type="InterPro" id="IPR001611">
    <property type="entry name" value="Leu-rich_rpt"/>
</dbReference>
<dbReference type="InterPro" id="IPR032675">
    <property type="entry name" value="LRR_dom_sf"/>
</dbReference>
<dbReference type="InterPro" id="IPR007111">
    <property type="entry name" value="NACHT_NTPase"/>
</dbReference>
<dbReference type="InterPro" id="IPR051261">
    <property type="entry name" value="NLR"/>
</dbReference>
<dbReference type="InterPro" id="IPR041267">
    <property type="entry name" value="NLRP_HD2"/>
</dbReference>
<dbReference type="InterPro" id="IPR041075">
    <property type="entry name" value="NOD1/2_WH"/>
</dbReference>
<dbReference type="InterPro" id="IPR027417">
    <property type="entry name" value="P-loop_NTPase"/>
</dbReference>
<dbReference type="PANTHER" id="PTHR24106">
    <property type="entry name" value="NACHT, LRR AND CARD DOMAINS-CONTAINING"/>
    <property type="match status" value="1"/>
</dbReference>
<dbReference type="Pfam" id="PF00619">
    <property type="entry name" value="CARD"/>
    <property type="match status" value="1"/>
</dbReference>
<dbReference type="Pfam" id="PF13516">
    <property type="entry name" value="LRR_6"/>
    <property type="match status" value="3"/>
</dbReference>
<dbReference type="Pfam" id="PF05729">
    <property type="entry name" value="NACHT"/>
    <property type="match status" value="1"/>
</dbReference>
<dbReference type="Pfam" id="PF17776">
    <property type="entry name" value="NLRC4_HD2"/>
    <property type="match status" value="1"/>
</dbReference>
<dbReference type="Pfam" id="PF17779">
    <property type="entry name" value="NOD2_WH"/>
    <property type="match status" value="1"/>
</dbReference>
<dbReference type="SMART" id="SM00368">
    <property type="entry name" value="LRR_RI"/>
    <property type="match status" value="7"/>
</dbReference>
<dbReference type="SUPFAM" id="SSF47986">
    <property type="entry name" value="DEATH domain"/>
    <property type="match status" value="2"/>
</dbReference>
<dbReference type="SUPFAM" id="SSF52540">
    <property type="entry name" value="P-loop containing nucleoside triphosphate hydrolases"/>
    <property type="match status" value="1"/>
</dbReference>
<dbReference type="SUPFAM" id="SSF52047">
    <property type="entry name" value="RNI-like"/>
    <property type="match status" value="1"/>
</dbReference>
<dbReference type="PROSITE" id="PS50209">
    <property type="entry name" value="CARD"/>
    <property type="match status" value="2"/>
</dbReference>
<dbReference type="PROSITE" id="PS51450">
    <property type="entry name" value="LRR"/>
    <property type="match status" value="4"/>
</dbReference>
<dbReference type="PROSITE" id="PS50837">
    <property type="entry name" value="NACHT"/>
    <property type="match status" value="1"/>
</dbReference>